<comment type="function">
    <text evidence="5 6 9 12 16 17">Catalyzes the cleavage of citrate into oxaloacetate and acetyl-CoA, the latter serving as common substrate in multiple biochemical reactions in protein, carbohydrate and lipid metabolism.</text>
</comment>
<comment type="catalytic activity">
    <reaction evidence="5 6 9 12 17">
        <text>oxaloacetate + acetyl-CoA + ADP + phosphate = citrate + ATP + CoA</text>
        <dbReference type="Rhea" id="RHEA:21160"/>
        <dbReference type="ChEBI" id="CHEBI:16452"/>
        <dbReference type="ChEBI" id="CHEBI:16947"/>
        <dbReference type="ChEBI" id="CHEBI:30616"/>
        <dbReference type="ChEBI" id="CHEBI:43474"/>
        <dbReference type="ChEBI" id="CHEBI:57287"/>
        <dbReference type="ChEBI" id="CHEBI:57288"/>
        <dbReference type="ChEBI" id="CHEBI:456216"/>
        <dbReference type="EC" id="2.3.3.8"/>
    </reaction>
    <physiologicalReaction direction="right-to-left" evidence="20 21 22 24 25">
        <dbReference type="Rhea" id="RHEA:21162"/>
    </physiologicalReaction>
</comment>
<comment type="cofactor">
    <cofactor evidence="9 10 11">
        <name>Mg(2+)</name>
        <dbReference type="ChEBI" id="CHEBI:18420"/>
    </cofactor>
</comment>
<comment type="activity regulation">
    <text evidence="5">Phosphorylation results in activation of its activity (PubMed:10653665). Glucose 6-phosphate, fructose 6-phosphate, fructose 2,6-bisphosphate, ribulose 5-phosphate, and fructose 1,6-bisphosphate also act as activators (PubMed:10653665).</text>
</comment>
<comment type="biophysicochemical properties">
    <kinetics>
        <KM evidence="17">98 uM for citrate</KM>
        <KM evidence="9">73.8 uM for citrate</KM>
        <KM evidence="5">127 uM for citrate (phosphorylated form by PKA)</KM>
        <KM evidence="5">149 uM for citrate (phosphorylated form by both PKA and GSK3)</KM>
        <KM evidence="17">14 uM for CoA</KM>
        <KM evidence="9">4 uM for CoA</KM>
        <KM evidence="5">2.59 uM for CoA (unphosphorylated form)</KM>
        <KM evidence="5">2.32 uM for CoA (unphosphorylated form in the presence of fructose 6-phosphate)</KM>
        <KM evidence="5">2.01 uM for CoA (phosphorylated form by PKA)</KM>
        <KM evidence="5">2.35 uM for CoA (phosphorylated form by PKA in the presence of fructose 6-phosphate)</KM>
        <KM evidence="5">2.28 uM for CoA (phosphorylated form by both PKA and GSK3)</KM>
        <KM evidence="5">2.09 uM for CoA (phosphorylated form by both PKA and GSK3 in the presence of fructose 6-phosphate)</KM>
        <KM evidence="17">120 uM for ATP</KM>
        <KM evidence="9">47 uM for ATP</KM>
        <KM evidence="5">41 uM for ATP (unphosphorylated form)</KM>
        <KM evidence="5">2.89 uM for ATP (unphosphorylated form in the presence of fructose 6-phosphate)</KM>
        <KM evidence="5">41.15 uM for ATP (phosphorylated form by PKA)</KM>
        <KM evidence="5">4.79 uM for ATP (phosphorylated form by PKA in the presence of fructose 6-phosphate)</KM>
        <KM evidence="5">37.28 uM for ATP (phosphorylated form by both PKA and GSK3)</KM>
        <KM evidence="5">4.01 uM for ATP (phosphorylated form by both PKA and GSK3 in the presence of fructose 6-phosphate)</KM>
        <Vmax evidence="17">1.9 umol/h/ug enzyme</Vmax>
    </kinetics>
</comment>
<comment type="subunit">
    <text evidence="10 11 17">Homotetramer.</text>
</comment>
<comment type="subcellular location">
    <subcellularLocation>
        <location evidence="17">Cytoplasm</location>
        <location evidence="17">Cytosol</location>
    </subcellularLocation>
</comment>
<comment type="alternative products">
    <event type="alternative splicing"/>
    <isoform>
        <id>P53396-1</id>
        <name>1</name>
        <sequence type="displayed"/>
    </isoform>
    <isoform>
        <id>P53396-2</id>
        <name>2</name>
        <sequence type="described" ref="VSP_042201"/>
    </isoform>
    <isoform>
        <id>P53396-3</id>
        <name>3</name>
        <sequence type="described" ref="VSP_057230 VSP_042201"/>
    </isoform>
</comment>
<comment type="PTM">
    <text evidence="1 5 14">Phosphorylated by PKA and GSK3 in a sequential manner; phosphorylation results in activation of its activity (PubMed:10653665). Phosphorylation on Thr-447 and Ser-451 depends on the phosphorylation state of Ser-455 (By similarity). Phosphorylation on Ser-455 is decreased by prior phosphorylation on the other 2 residues (By similarity). Phosphorylated at Ser-455 by BCKDK and dephosphorylated by protein phosphatase PPM1K.</text>
</comment>
<comment type="PTM">
    <text evidence="8">ISGylated.</text>
</comment>
<comment type="PTM">
    <text evidence="12">Acetylated at Lys-540, Lys-546 and Lys-554 by KAT2B/PCAF (PubMed:23932781). Acetylation is promoted by glucose and stabilizes the protein, probably by preventing ubiquitination at the same sites (PubMed:23932781). Acetylation promotes de novo lipid synthesis (PubMed:23932781). Deacetylated by SIRT2.</text>
</comment>
<comment type="PTM">
    <text evidence="12 13 15">Ubiquitinated at Lys-540, Lys-546 and Lys-554 by the BCR(KLHL25) E3 ubiquitin ligase complex and UBR4, leading to its degradation (PubMed:23932781, PubMed:27664236, PubMed:34491895). Ubiquitination is probably inhibited by acetylation at same site (PubMed:23932781). BCR(KLHL25)-mediated degradation of ACLY promotes fatty acid oxidation and is required for differentiation of inducible regulatory T (iTreg) cells (PubMed:34491895).</text>
</comment>
<comment type="similarity">
    <text evidence="19">In the N-terminal section; belongs to the succinate/malate CoA ligase beta subunit family.</text>
</comment>
<comment type="similarity">
    <text evidence="19">In the C-terminal section; belongs to the succinate/malate CoA ligase alpha subunit family.</text>
</comment>
<comment type="online information" name="Atlas of Genetics and Cytogenetics in Oncology and Haematology">
    <link uri="https://atlasgeneticsoncology.org/gene/50486/ACLY"/>
</comment>
<keyword id="KW-0002">3D-structure</keyword>
<keyword id="KW-0007">Acetylation</keyword>
<keyword id="KW-0025">Alternative splicing</keyword>
<keyword id="KW-0067">ATP-binding</keyword>
<keyword id="KW-0963">Cytoplasm</keyword>
<keyword id="KW-1017">Isopeptide bond</keyword>
<keyword id="KW-0444">Lipid biosynthesis</keyword>
<keyword id="KW-0443">Lipid metabolism</keyword>
<keyword id="KW-0460">Magnesium</keyword>
<keyword id="KW-0479">Metal-binding</keyword>
<keyword id="KW-0547">Nucleotide-binding</keyword>
<keyword id="KW-0597">Phosphoprotein</keyword>
<keyword id="KW-1267">Proteomics identification</keyword>
<keyword id="KW-1185">Reference proteome</keyword>
<keyword id="KW-0808">Transferase</keyword>
<keyword id="KW-0832">Ubl conjugation</keyword>
<reference key="1">
    <citation type="journal article" date="1992" name="Eur. J. Biochem.">
        <title>Cloning and expression of a human ATP-citrate lyase cDNA.</title>
        <authorList>
            <person name="Elshourbagy N.A."/>
            <person name="Near J.C."/>
            <person name="Kmetz P.J."/>
            <person name="Wells T.N.C."/>
            <person name="Groot P.H.E."/>
            <person name="Saxty B.A."/>
            <person name="Hughes S.A."/>
            <person name="Franklin M."/>
            <person name="Gloger I.S."/>
        </authorList>
    </citation>
    <scope>NUCLEOTIDE SEQUENCE [MRNA] (ISOFORM 1)</scope>
    <scope>FUNCTION</scope>
    <scope>CATALYTIC ACTIVITY</scope>
    <scope>MUTAGENESIS OF HIS-760</scope>
    <scope>ACTIVE SITE</scope>
    <scope>VARIANT ASP-175</scope>
    <source>
        <tissue>Liver</tissue>
    </source>
</reference>
<reference key="2">
    <citation type="journal article" date="1997" name="Protein Expr. Purif.">
        <title>Variant cDNA sequences of human ATP:citrate lyase: cloning, expression, and purification from baculovirus-infected insect cells.</title>
        <authorList>
            <person name="Lord K.A."/>
            <person name="Wang X.M."/>
            <person name="Simmons S.J."/>
            <person name="Bruckner R.C."/>
            <person name="Loscig J."/>
            <person name="O'Connor B."/>
            <person name="Bentley R."/>
            <person name="Smallwood A."/>
            <person name="Chadwick C.C."/>
            <person name="Stevis P.E."/>
            <person name="Ciccarelli R.B."/>
        </authorList>
    </citation>
    <scope>NUCLEOTIDE SEQUENCE [MRNA] (ISOFORM 1)</scope>
    <scope>FUNCTION</scope>
    <scope>CATALYTIC ACTIVITY</scope>
    <scope>BIOPHYSICOCHEMICAL PROPERTIES</scope>
    <scope>SUBUNIT</scope>
    <scope>SUBCELLULAR LOCATION</scope>
    <scope>VARIANT ASP-175</scope>
    <source>
        <tissue>Liver</tissue>
    </source>
</reference>
<reference key="3">
    <citation type="journal article" date="2004" name="Nat. Genet.">
        <title>Complete sequencing and characterization of 21,243 full-length human cDNAs.</title>
        <authorList>
            <person name="Ota T."/>
            <person name="Suzuki Y."/>
            <person name="Nishikawa T."/>
            <person name="Otsuki T."/>
            <person name="Sugiyama T."/>
            <person name="Irie R."/>
            <person name="Wakamatsu A."/>
            <person name="Hayashi K."/>
            <person name="Sato H."/>
            <person name="Nagai K."/>
            <person name="Kimura K."/>
            <person name="Makita H."/>
            <person name="Sekine M."/>
            <person name="Obayashi M."/>
            <person name="Nishi T."/>
            <person name="Shibahara T."/>
            <person name="Tanaka T."/>
            <person name="Ishii S."/>
            <person name="Yamamoto J."/>
            <person name="Saito K."/>
            <person name="Kawai Y."/>
            <person name="Isono Y."/>
            <person name="Nakamura Y."/>
            <person name="Nagahari K."/>
            <person name="Murakami K."/>
            <person name="Yasuda T."/>
            <person name="Iwayanagi T."/>
            <person name="Wagatsuma M."/>
            <person name="Shiratori A."/>
            <person name="Sudo H."/>
            <person name="Hosoiri T."/>
            <person name="Kaku Y."/>
            <person name="Kodaira H."/>
            <person name="Kondo H."/>
            <person name="Sugawara M."/>
            <person name="Takahashi M."/>
            <person name="Kanda K."/>
            <person name="Yokoi T."/>
            <person name="Furuya T."/>
            <person name="Kikkawa E."/>
            <person name="Omura Y."/>
            <person name="Abe K."/>
            <person name="Kamihara K."/>
            <person name="Katsuta N."/>
            <person name="Sato K."/>
            <person name="Tanikawa M."/>
            <person name="Yamazaki M."/>
            <person name="Ninomiya K."/>
            <person name="Ishibashi T."/>
            <person name="Yamashita H."/>
            <person name="Murakawa K."/>
            <person name="Fujimori K."/>
            <person name="Tanai H."/>
            <person name="Kimata M."/>
            <person name="Watanabe M."/>
            <person name="Hiraoka S."/>
            <person name="Chiba Y."/>
            <person name="Ishida S."/>
            <person name="Ono Y."/>
            <person name="Takiguchi S."/>
            <person name="Watanabe S."/>
            <person name="Yosida M."/>
            <person name="Hotuta T."/>
            <person name="Kusano J."/>
            <person name="Kanehori K."/>
            <person name="Takahashi-Fujii A."/>
            <person name="Hara H."/>
            <person name="Tanase T.-O."/>
            <person name="Nomura Y."/>
            <person name="Togiya S."/>
            <person name="Komai F."/>
            <person name="Hara R."/>
            <person name="Takeuchi K."/>
            <person name="Arita M."/>
            <person name="Imose N."/>
            <person name="Musashino K."/>
            <person name="Yuuki H."/>
            <person name="Oshima A."/>
            <person name="Sasaki N."/>
            <person name="Aotsuka S."/>
            <person name="Yoshikawa Y."/>
            <person name="Matsunawa H."/>
            <person name="Ichihara T."/>
            <person name="Shiohata N."/>
            <person name="Sano S."/>
            <person name="Moriya S."/>
            <person name="Momiyama H."/>
            <person name="Satoh N."/>
            <person name="Takami S."/>
            <person name="Terashima Y."/>
            <person name="Suzuki O."/>
            <person name="Nakagawa S."/>
            <person name="Senoh A."/>
            <person name="Mizoguchi H."/>
            <person name="Goto Y."/>
            <person name="Shimizu F."/>
            <person name="Wakebe H."/>
            <person name="Hishigaki H."/>
            <person name="Watanabe T."/>
            <person name="Sugiyama A."/>
            <person name="Takemoto M."/>
            <person name="Kawakami B."/>
            <person name="Yamazaki M."/>
            <person name="Watanabe K."/>
            <person name="Kumagai A."/>
            <person name="Itakura S."/>
            <person name="Fukuzumi Y."/>
            <person name="Fujimori Y."/>
            <person name="Komiyama M."/>
            <person name="Tashiro H."/>
            <person name="Tanigami A."/>
            <person name="Fujiwara T."/>
            <person name="Ono T."/>
            <person name="Yamada K."/>
            <person name="Fujii Y."/>
            <person name="Ozaki K."/>
            <person name="Hirao M."/>
            <person name="Ohmori Y."/>
            <person name="Kawabata A."/>
            <person name="Hikiji T."/>
            <person name="Kobatake N."/>
            <person name="Inagaki H."/>
            <person name="Ikema Y."/>
            <person name="Okamoto S."/>
            <person name="Okitani R."/>
            <person name="Kawakami T."/>
            <person name="Noguchi S."/>
            <person name="Itoh T."/>
            <person name="Shigeta K."/>
            <person name="Senba T."/>
            <person name="Matsumura K."/>
            <person name="Nakajima Y."/>
            <person name="Mizuno T."/>
            <person name="Morinaga M."/>
            <person name="Sasaki M."/>
            <person name="Togashi T."/>
            <person name="Oyama M."/>
            <person name="Hata H."/>
            <person name="Watanabe M."/>
            <person name="Komatsu T."/>
            <person name="Mizushima-Sugano J."/>
            <person name="Satoh T."/>
            <person name="Shirai Y."/>
            <person name="Takahashi Y."/>
            <person name="Nakagawa K."/>
            <person name="Okumura K."/>
            <person name="Nagase T."/>
            <person name="Nomura N."/>
            <person name="Kikuchi H."/>
            <person name="Masuho Y."/>
            <person name="Yamashita R."/>
            <person name="Nakai K."/>
            <person name="Yada T."/>
            <person name="Nakamura Y."/>
            <person name="Ohara O."/>
            <person name="Isogai T."/>
            <person name="Sugano S."/>
        </authorList>
    </citation>
    <scope>NUCLEOTIDE SEQUENCE [LARGE SCALE MRNA] (ISOFORMS 2 AND 3)</scope>
    <scope>VARIANT ASP-175</scope>
    <source>
        <tissue>Hippocampus</tissue>
        <tissue>Uterus</tissue>
    </source>
</reference>
<reference key="4">
    <citation type="journal article" date="2006" name="Nature">
        <title>DNA sequence of human chromosome 17 and analysis of rearrangement in the human lineage.</title>
        <authorList>
            <person name="Zody M.C."/>
            <person name="Garber M."/>
            <person name="Adams D.J."/>
            <person name="Sharpe T."/>
            <person name="Harrow J."/>
            <person name="Lupski J.R."/>
            <person name="Nicholson C."/>
            <person name="Searle S.M."/>
            <person name="Wilming L."/>
            <person name="Young S.K."/>
            <person name="Abouelleil A."/>
            <person name="Allen N.R."/>
            <person name="Bi W."/>
            <person name="Bloom T."/>
            <person name="Borowsky M.L."/>
            <person name="Bugalter B.E."/>
            <person name="Butler J."/>
            <person name="Chang J.L."/>
            <person name="Chen C.-K."/>
            <person name="Cook A."/>
            <person name="Corum B."/>
            <person name="Cuomo C.A."/>
            <person name="de Jong P.J."/>
            <person name="DeCaprio D."/>
            <person name="Dewar K."/>
            <person name="FitzGerald M."/>
            <person name="Gilbert J."/>
            <person name="Gibson R."/>
            <person name="Gnerre S."/>
            <person name="Goldstein S."/>
            <person name="Grafham D.V."/>
            <person name="Grocock R."/>
            <person name="Hafez N."/>
            <person name="Hagopian D.S."/>
            <person name="Hart E."/>
            <person name="Norman C.H."/>
            <person name="Humphray S."/>
            <person name="Jaffe D.B."/>
            <person name="Jones M."/>
            <person name="Kamal M."/>
            <person name="Khodiyar V.K."/>
            <person name="LaButti K."/>
            <person name="Laird G."/>
            <person name="Lehoczky J."/>
            <person name="Liu X."/>
            <person name="Lokyitsang T."/>
            <person name="Loveland J."/>
            <person name="Lui A."/>
            <person name="Macdonald P."/>
            <person name="Major J.E."/>
            <person name="Matthews L."/>
            <person name="Mauceli E."/>
            <person name="McCarroll S.A."/>
            <person name="Mihalev A.H."/>
            <person name="Mudge J."/>
            <person name="Nguyen C."/>
            <person name="Nicol R."/>
            <person name="O'Leary S.B."/>
            <person name="Osoegawa K."/>
            <person name="Schwartz D.C."/>
            <person name="Shaw-Smith C."/>
            <person name="Stankiewicz P."/>
            <person name="Steward C."/>
            <person name="Swarbreck D."/>
            <person name="Venkataraman V."/>
            <person name="Whittaker C.A."/>
            <person name="Yang X."/>
            <person name="Zimmer A.R."/>
            <person name="Bradley A."/>
            <person name="Hubbard T."/>
            <person name="Birren B.W."/>
            <person name="Rogers J."/>
            <person name="Lander E.S."/>
            <person name="Nusbaum C."/>
        </authorList>
    </citation>
    <scope>NUCLEOTIDE SEQUENCE [LARGE SCALE GENOMIC DNA]</scope>
</reference>
<reference key="5">
    <citation type="journal article" date="2004" name="Genome Res.">
        <title>The status, quality, and expansion of the NIH full-length cDNA project: the Mammalian Gene Collection (MGC).</title>
        <authorList>
            <consortium name="The MGC Project Team"/>
        </authorList>
    </citation>
    <scope>NUCLEOTIDE SEQUENCE [LARGE SCALE MRNA] (ISOFORM 1)</scope>
    <source>
        <tissue>Lymph</tissue>
    </source>
</reference>
<reference key="6">
    <citation type="journal article" date="2000" name="Biochemistry">
        <title>Phosphorylation of recombinant human ATP:citrate lyase by cAMP-dependent protein kinase abolishes homotropic allosteric regulation of the enzyme by citrate and increases the enzyme activity. Allosteric activation of ATP:citrate lyase by phosphorylated sugars.</title>
        <authorList>
            <person name="Potapova I.A."/>
            <person name="El-Maghrabi M.R."/>
            <person name="Doronin S.V."/>
            <person name="Benjamin W.B."/>
        </authorList>
    </citation>
    <scope>FUNCTION</scope>
    <scope>CATALYTIC ACTIVITY</scope>
    <scope>ACTIVITY REGULATION</scope>
    <scope>BIOPHYSICOCHEMICAL PROPERTIES</scope>
    <scope>PHOSPHORYLATION</scope>
</reference>
<reference key="7">
    <citation type="journal article" date="2005" name="Biochem. Biophys. Res. Commun.">
        <title>Proteomic identification of proteins conjugated to ISG15 in mouse and human cells.</title>
        <authorList>
            <person name="Giannakopoulos N.V."/>
            <person name="Luo J.K."/>
            <person name="Papov V."/>
            <person name="Zou W."/>
            <person name="Lenschow D.J."/>
            <person name="Jacobs B.S."/>
            <person name="Borden E.C."/>
            <person name="Li J."/>
            <person name="Virgin H.W."/>
            <person name="Zhang D.E."/>
        </authorList>
    </citation>
    <scope>ISGYLATION</scope>
</reference>
<reference key="8">
    <citation type="journal article" date="2005" name="Nat. Biotechnol.">
        <title>Immunoaffinity profiling of tyrosine phosphorylation in cancer cells.</title>
        <authorList>
            <person name="Rush J."/>
            <person name="Moritz A."/>
            <person name="Lee K.A."/>
            <person name="Guo A."/>
            <person name="Goss V.L."/>
            <person name="Spek E.J."/>
            <person name="Zhang H."/>
            <person name="Zha X.-M."/>
            <person name="Polakiewicz R.D."/>
            <person name="Comb M.J."/>
        </authorList>
    </citation>
    <scope>PHOSPHORYLATION [LARGE SCALE ANALYSIS] AT TYR-131 AND TYR-682</scope>
    <scope>IDENTIFICATION BY MASS SPECTROMETRY [LARGE SCALE ANALYSIS]</scope>
</reference>
<reference key="9">
    <citation type="journal article" date="2006" name="Cell">
        <title>Global, in vivo, and site-specific phosphorylation dynamics in signaling networks.</title>
        <authorList>
            <person name="Olsen J.V."/>
            <person name="Blagoev B."/>
            <person name="Gnad F."/>
            <person name="Macek B."/>
            <person name="Kumar C."/>
            <person name="Mortensen P."/>
            <person name="Mann M."/>
        </authorList>
    </citation>
    <scope>PHOSPHORYLATION [LARGE SCALE ANALYSIS] AT SER-481</scope>
    <scope>IDENTIFICATION BY MASS SPECTROMETRY [LARGE SCALE ANALYSIS]</scope>
    <source>
        <tissue>Cervix carcinoma</tissue>
    </source>
</reference>
<reference key="10">
    <citation type="journal article" date="2007" name="J. Proteome Res.">
        <title>Improved titanium dioxide enrichment of phosphopeptides from HeLa cells and high confident phosphopeptide identification by cross-validation of MS/MS and MS/MS/MS spectra.</title>
        <authorList>
            <person name="Yu L.R."/>
            <person name="Zhu Z."/>
            <person name="Chan K.C."/>
            <person name="Issaq H.J."/>
            <person name="Dimitrov D.S."/>
            <person name="Veenstra T.D."/>
        </authorList>
    </citation>
    <scope>PHOSPHORYLATION [LARGE SCALE ANALYSIS] AT SER-481</scope>
    <scope>IDENTIFICATION BY MASS SPECTROMETRY [LARGE SCALE ANALYSIS]</scope>
    <source>
        <tissue>Cervix carcinoma</tissue>
    </source>
</reference>
<reference key="11">
    <citation type="journal article" date="2008" name="J. Proteome Res.">
        <title>Phosphoproteome of resting human platelets.</title>
        <authorList>
            <person name="Zahedi R.P."/>
            <person name="Lewandrowski U."/>
            <person name="Wiesner J."/>
            <person name="Wortelkamp S."/>
            <person name="Moebius J."/>
            <person name="Schuetz C."/>
            <person name="Walter U."/>
            <person name="Gambaryan S."/>
            <person name="Sickmann A."/>
        </authorList>
    </citation>
    <scope>IDENTIFICATION BY MASS SPECTROMETRY [LARGE SCALE ANALYSIS]</scope>
    <source>
        <tissue>Platelet</tissue>
    </source>
</reference>
<reference key="12">
    <citation type="journal article" date="2008" name="Mol. Cell">
        <title>Kinase-selective enrichment enables quantitative phosphoproteomics of the kinome across the cell cycle.</title>
        <authorList>
            <person name="Daub H."/>
            <person name="Olsen J.V."/>
            <person name="Bairlein M."/>
            <person name="Gnad F."/>
            <person name="Oppermann F.S."/>
            <person name="Korner R."/>
            <person name="Greff Z."/>
            <person name="Keri G."/>
            <person name="Stemmann O."/>
            <person name="Mann M."/>
        </authorList>
    </citation>
    <scope>PHOSPHORYLATION [LARGE SCALE ANALYSIS] AT SER-481</scope>
    <scope>IDENTIFICATION BY MASS SPECTROMETRY [LARGE SCALE ANALYSIS]</scope>
    <source>
        <tissue>Cervix carcinoma</tissue>
    </source>
</reference>
<reference key="13">
    <citation type="journal article" date="2008" name="Proc. Natl. Acad. Sci. U.S.A.">
        <title>A quantitative atlas of mitotic phosphorylation.</title>
        <authorList>
            <person name="Dephoure N."/>
            <person name="Zhou C."/>
            <person name="Villen J."/>
            <person name="Beausoleil S.A."/>
            <person name="Bakalarski C.E."/>
            <person name="Elledge S.J."/>
            <person name="Gygi S.P."/>
        </authorList>
    </citation>
    <scope>PHOSPHORYLATION [LARGE SCALE ANALYSIS] AT SER-455; SER-481 AND SER-1100</scope>
    <scope>IDENTIFICATION BY MASS SPECTROMETRY [LARGE SCALE ANALYSIS]</scope>
    <source>
        <tissue>Cervix carcinoma</tissue>
    </source>
</reference>
<reference key="14">
    <citation type="journal article" date="2009" name="J. Lipid Res.">
        <title>A novel direct homogeneous assay for ATP citrate lyase.</title>
        <authorList>
            <person name="Ma Z."/>
            <person name="Chu C.H."/>
            <person name="Cheng D."/>
        </authorList>
    </citation>
    <scope>FUNCTION</scope>
    <scope>CATALYTIC ACTIVITY</scope>
    <scope>COFACTOR</scope>
    <scope>BIOPHYSICOCHEMICAL PROPERTIES</scope>
</reference>
<reference key="15">
    <citation type="journal article" date="2009" name="Mol. Cell. Proteomics">
        <title>Large-scale proteomics analysis of the human kinome.</title>
        <authorList>
            <person name="Oppermann F.S."/>
            <person name="Gnad F."/>
            <person name="Olsen J.V."/>
            <person name="Hornberger R."/>
            <person name="Greff Z."/>
            <person name="Keri G."/>
            <person name="Mann M."/>
            <person name="Daub H."/>
        </authorList>
    </citation>
    <scope>PHOSPHORYLATION [LARGE SCALE ANALYSIS] AT SER-481; THR-639; SER-663; TYR-682; SER-839 AND SER-1100</scope>
    <scope>IDENTIFICATION BY MASS SPECTROMETRY [LARGE SCALE ANALYSIS]</scope>
</reference>
<reference key="16">
    <citation type="journal article" date="2009" name="Sci. Signal.">
        <title>Quantitative phosphoproteomic analysis of T cell receptor signaling reveals system-wide modulation of protein-protein interactions.</title>
        <authorList>
            <person name="Mayya V."/>
            <person name="Lundgren D.H."/>
            <person name="Hwang S.-I."/>
            <person name="Rezaul K."/>
            <person name="Wu L."/>
            <person name="Eng J.K."/>
            <person name="Rodionov V."/>
            <person name="Han D.K."/>
        </authorList>
    </citation>
    <scope>PHOSPHORYLATION [LARGE SCALE ANALYSIS] AT SER-481</scope>
    <scope>IDENTIFICATION BY MASS SPECTROMETRY [LARGE SCALE ANALYSIS]</scope>
    <source>
        <tissue>Leukemic T-cell</tissue>
    </source>
</reference>
<reference key="17">
    <citation type="journal article" date="2009" name="Science">
        <title>Lysine acetylation targets protein complexes and co-regulates major cellular functions.</title>
        <authorList>
            <person name="Choudhary C."/>
            <person name="Kumar C."/>
            <person name="Gnad F."/>
            <person name="Nielsen M.L."/>
            <person name="Rehman M."/>
            <person name="Walther T.C."/>
            <person name="Olsen J.V."/>
            <person name="Mann M."/>
        </authorList>
    </citation>
    <scope>ACETYLATION [LARGE SCALE ANALYSIS] AT LYS-546; LYS-554; LYS-948; LYS-968 AND LYS-1077</scope>
    <scope>IDENTIFICATION BY MASS SPECTROMETRY [LARGE SCALE ANALYSIS]</scope>
</reference>
<reference key="18">
    <citation type="journal article" date="2010" name="Sci. Signal.">
        <title>Quantitative phosphoproteomics reveals widespread full phosphorylation site occupancy during mitosis.</title>
        <authorList>
            <person name="Olsen J.V."/>
            <person name="Vermeulen M."/>
            <person name="Santamaria A."/>
            <person name="Kumar C."/>
            <person name="Miller M.L."/>
            <person name="Jensen L.J."/>
            <person name="Gnad F."/>
            <person name="Cox J."/>
            <person name="Jensen T.S."/>
            <person name="Nigg E.A."/>
            <person name="Brunak S."/>
            <person name="Mann M."/>
        </authorList>
    </citation>
    <scope>PHOSPHORYLATION [LARGE SCALE ANALYSIS] AT SER-455 AND SER-481</scope>
    <scope>IDENTIFICATION BY MASS SPECTROMETRY [LARGE SCALE ANALYSIS]</scope>
    <source>
        <tissue>Cervix carcinoma</tissue>
    </source>
</reference>
<reference key="19">
    <citation type="journal article" date="2011" name="BMC Syst. Biol.">
        <title>Initial characterization of the human central proteome.</title>
        <authorList>
            <person name="Burkard T.R."/>
            <person name="Planyavsky M."/>
            <person name="Kaupe I."/>
            <person name="Breitwieser F.P."/>
            <person name="Buerckstuemmer T."/>
            <person name="Bennett K.L."/>
            <person name="Superti-Furga G."/>
            <person name="Colinge J."/>
        </authorList>
    </citation>
    <scope>IDENTIFICATION BY MASS SPECTROMETRY [LARGE SCALE ANALYSIS]</scope>
</reference>
<reference key="20">
    <citation type="journal article" date="2011" name="Sci. Signal.">
        <title>System-wide temporal characterization of the proteome and phosphoproteome of human embryonic stem cell differentiation.</title>
        <authorList>
            <person name="Rigbolt K.T."/>
            <person name="Prokhorova T.A."/>
            <person name="Akimov V."/>
            <person name="Henningsen J."/>
            <person name="Johansen P.T."/>
            <person name="Kratchmarova I."/>
            <person name="Kassem M."/>
            <person name="Mann M."/>
            <person name="Olsen J.V."/>
            <person name="Blagoev B."/>
        </authorList>
    </citation>
    <scope>PHOSPHORYLATION [LARGE SCALE ANALYSIS] AT SER-455 AND SER-481</scope>
    <scope>IDENTIFICATION BY MASS SPECTROMETRY [LARGE SCALE ANALYSIS]</scope>
</reference>
<reference key="21">
    <citation type="journal article" date="2013" name="J. Proteome Res.">
        <title>Toward a comprehensive characterization of a human cancer cell phosphoproteome.</title>
        <authorList>
            <person name="Zhou H."/>
            <person name="Di Palma S."/>
            <person name="Preisinger C."/>
            <person name="Peng M."/>
            <person name="Polat A.N."/>
            <person name="Heck A.J."/>
            <person name="Mohammed S."/>
        </authorList>
    </citation>
    <scope>PHOSPHORYLATION [LARGE SCALE ANALYSIS] AT SER-455; SER-459 AND SER-481</scope>
    <scope>IDENTIFICATION BY MASS SPECTROMETRY [LARGE SCALE ANALYSIS]</scope>
    <source>
        <tissue>Cervix carcinoma</tissue>
        <tissue>Erythroleukemia</tissue>
    </source>
</reference>
<reference key="22">
    <citation type="journal article" date="2013" name="Mol. Cell">
        <title>Acetylation stabilizes ATP-citrate lyase to promote lipid biosynthesis and tumor growth.</title>
        <authorList>
            <person name="Lin R."/>
            <person name="Tao R."/>
            <person name="Gao X."/>
            <person name="Li T."/>
            <person name="Zhou X."/>
            <person name="Guan K.L."/>
            <person name="Xiong Y."/>
            <person name="Lei Q.Y."/>
        </authorList>
    </citation>
    <scope>FUNCTION</scope>
    <scope>ACETYLATION AT LYS-540; LYS-546 AND LYS-554</scope>
    <scope>UBIQUITINATION AT LYS-540; LYS-546 AND LYS-554</scope>
    <scope>MUTAGENESIS OF LYS-540; LYS-546 AND LYS-554</scope>
    <scope>CATALYTIC ACTIVITY</scope>
</reference>
<reference key="23">
    <citation type="journal article" date="2014" name="J. Proteomics">
        <title>An enzyme assisted RP-RPLC approach for in-depth analysis of human liver phosphoproteome.</title>
        <authorList>
            <person name="Bian Y."/>
            <person name="Song C."/>
            <person name="Cheng K."/>
            <person name="Dong M."/>
            <person name="Wang F."/>
            <person name="Huang J."/>
            <person name="Sun D."/>
            <person name="Wang L."/>
            <person name="Ye M."/>
            <person name="Zou H."/>
        </authorList>
    </citation>
    <scope>PHOSPHORYLATION [LARGE SCALE ANALYSIS] AT SER-455 AND SER-481</scope>
    <scope>IDENTIFICATION BY MASS SPECTROMETRY [LARGE SCALE ANALYSIS]</scope>
    <source>
        <tissue>Liver</tissue>
    </source>
</reference>
<reference key="24">
    <citation type="journal article" date="2016" name="Genes Dev.">
        <title>Cullin3-KLHL25 ubiquitin ligase targets ACLY for degradation to inhibit lipid synthesis and tumor progression.</title>
        <authorList>
            <person name="Zhang C."/>
            <person name="Liu J."/>
            <person name="Huang G."/>
            <person name="Zhao Y."/>
            <person name="Yue X."/>
            <person name="Wu H."/>
            <person name="Li J."/>
            <person name="Zhu J."/>
            <person name="Shen Z."/>
            <person name="Haffty B.G."/>
            <person name="Hu W."/>
            <person name="Feng Z."/>
        </authorList>
    </citation>
    <scope>UBIQUITINATION AT LYS-540; LYS-546 AND LYS-554</scope>
    <scope>MUTAGENESIS OF LYS-540; LYS-546 AND LYS-554</scope>
</reference>
<reference key="25">
    <citation type="journal article" date="2018" name="Cell Metab.">
        <title>The BCKDH Kinase and Phosphatase Integrate BCAA and Lipid Metabolism via Regulation of ATP-Citrate Lyase.</title>
        <authorList>
            <person name="White P.J."/>
            <person name="McGarrah R.W."/>
            <person name="Grimsrud P.A."/>
            <person name="Tso S.C."/>
            <person name="Yang W.H."/>
            <person name="Haldeman J.M."/>
            <person name="Grenier-Larouche T."/>
            <person name="An J."/>
            <person name="Lapworth A.L."/>
            <person name="Astapova I."/>
            <person name="Hannou S.A."/>
            <person name="George T."/>
            <person name="Arlotto M."/>
            <person name="Olson L.B."/>
            <person name="Lai M."/>
            <person name="Zhang G.F."/>
            <person name="Ilkayeva O."/>
            <person name="Herman M.A."/>
            <person name="Wynn R.M."/>
            <person name="Chuang D.T."/>
            <person name="Newgard C.B."/>
        </authorList>
    </citation>
    <scope>PHOSPHORYLATION AT SER-455</scope>
    <scope>PTM</scope>
</reference>
<reference key="26">
    <citation type="journal article" date="2021" name="Elife">
        <title>ACLY ubiquitination by CUL3-KLHL25 induces the reprogramming of fatty acid metabolism to facilitate iTreg differentiation.</title>
        <authorList>
            <person name="Tian M."/>
            <person name="Hao F."/>
            <person name="Jin X."/>
            <person name="Sun X."/>
            <person name="Jiang Y."/>
            <person name="Wang Y."/>
            <person name="Li D."/>
            <person name="Chang T."/>
            <person name="Zou Y."/>
            <person name="Peng P."/>
            <person name="Xia C."/>
            <person name="Liu J."/>
            <person name="Li Y."/>
            <person name="Wang P."/>
            <person name="Feng Y."/>
            <person name="Wei M."/>
        </authorList>
    </citation>
    <scope>UBIQUITINATION</scope>
</reference>
<reference key="27">
    <citation type="journal article" date="2025" name="EMBO J.">
        <title>SLC25A1 and ACLY maintain cytosolic acetyl-CoA and regulate ferroptosis susceptibility via FSP1 acetylation.</title>
        <authorList>
            <person name="Li W."/>
            <person name="Han J."/>
            <person name="Huang B."/>
            <person name="Xu T."/>
            <person name="Wan Y."/>
            <person name="Luo D."/>
            <person name="Kong W."/>
            <person name="Yu Y."/>
            <person name="Zhang L."/>
            <person name="Nian Y."/>
            <person name="Chu B."/>
            <person name="Yin C."/>
        </authorList>
    </citation>
    <scope>FUNCTION</scope>
</reference>
<reference key="28">
    <citation type="journal article" date="2010" name="J. Biol. Chem.">
        <title>Identification of the citrate-binding site of human ATP-citrate lyase using X-ray crystallography.</title>
        <authorList>
            <person name="Sun T."/>
            <person name="Hayakawa K."/>
            <person name="Bateman K.S."/>
            <person name="Fraser M.E."/>
        </authorList>
    </citation>
    <scope>X-RAY CRYSTALLOGRAPHY (2.1 ANGSTROMS) OF 1-425 AND 487-820 IN COMPLEX WITH CITRATE AND MAGNESIUM</scope>
    <scope>COFACTOR</scope>
    <scope>CITRATE-BINDING SITES</scope>
</reference>
<reference key="29">
    <citation type="journal article" date="2011" name="Acta Crystallogr. F">
        <title>ADP-Mg2+ bound to the ATP-grasp domain of ATP-citrate lyase.</title>
        <authorList>
            <person name="Sun T."/>
            <person name="Hayakawa K."/>
            <person name="Fraser M.E."/>
        </authorList>
    </citation>
    <scope>X-RAY CRYSTALLOGRAPHY (2.3 ANGSTROMS) OF 1-817 IN COMPLEX WITH ADP AND MAGNESIUM</scope>
    <scope>COFACTOR</scope>
</reference>
<protein>
    <recommendedName>
        <fullName>ATP-citrate synthase</fullName>
        <ecNumber evidence="5 6 9 12 17">2.3.3.8</ecNumber>
    </recommendedName>
    <alternativeName>
        <fullName>ATP-citrate (pro-S-)-lyase</fullName>
        <shortName>ACL</shortName>
    </alternativeName>
    <alternativeName>
        <fullName>Citrate cleavage enzyme</fullName>
    </alternativeName>
</protein>
<sequence>MSAKAISEQTGKELLYKFICTTSAIQNRFKYARVTPDTDWARLLQDHPWLLSQNLVVKPDQLIKRRGKLGLVGVNLTLDGVKSWLKPRLGQEATVGKATGFLKNFLIEPFVPHSQAEEFYVCIYATREGDYVLFHHEGGVDVGDVDAKAQKLLVGVDEKLNPEDIKKHLLVHAPEDKKEILASFISGLFNFYEDLYFTYLEINPLVVTKDGVYVLDLAAKVDATADYICKVKWGDIEFPPPFGREAYPEEAYIADLDAKSGASLKLTLLNPKGRIWTMVAGGGASVVYSDTICDLGGVNELANYGEYSGAPSEQQTYDYAKTILSLMTREKHPDGKILIIGGSIANFTNVAATFKGIVRAIRDYQGPLKEHEVTIFVRRGGPNYQEGLRVMGEVGKTTGIPIHVFGTETHMTAIVGMALGHRPIPNQPPTAAHTANFLLNASGSTSTPAPSRTASFSESRADEVAPAKKAKPAMPQDSVPSPRSLQGKSTTLFSRHTKAIVWGMQTRAVQGMLDFDYVCSRDEPSVAAMVYPFTGDHKQKFYWGHKEILIPVFKNMADAMRKHPEVDVLINFASLRSAYDSTMETMNYAQIRTIAIIAEGIPEALTRKLIKKADQKGVTIIGPATVGGIKPGCFKIGNTGGMLDNILASKLYRPGSVAYVSRSGGMSNELNNIISRTTDGVYEGVAIGGDRYPGSTFMDHVLRYQDTPGVKMIVVLGEIGGTEEYKICRGIKEGRLTKPIVCWCIGTCATMFSSEVQFGHAGACANQASETAVAKNQALKEAGVFVPRSFDELGEIIQSVYEDLVANGVIVPAQEVPPPTVPMDYSWARELGLIRKPASFMTSICDERGQELIYAGMPITEVFKEEMGIGGVLGLLWFQKRLPKYSCQFIEMCLMVTADHGPAVSGAHNTIICARAGKDLVSSLTSGLLTIGDRFGGALDAAAKMFSKAFDSGIIPMEFVNKMKKEGKLIMGIGHRVKSINNPDMRVQILKDYVRQHFPATPLLDYALEVEKITTSKKPNLILNVDGLIGVAFVDMLRNCGSFTREEADEYIDIGALNGIFVLGRSMGFIGHYLDQKRLKQGLYRHPWDDISYVLPEHMSM</sequence>
<dbReference type="EC" id="2.3.3.8" evidence="5 6 9 12 17"/>
<dbReference type="EMBL" id="X64330">
    <property type="protein sequence ID" value="CAA45614.1"/>
    <property type="molecule type" value="mRNA"/>
</dbReference>
<dbReference type="EMBL" id="U18197">
    <property type="protein sequence ID" value="AAB60340.1"/>
    <property type="molecule type" value="mRNA"/>
</dbReference>
<dbReference type="EMBL" id="AK295675">
    <property type="protein sequence ID" value="BAG58532.1"/>
    <property type="molecule type" value="mRNA"/>
</dbReference>
<dbReference type="EMBL" id="AK304802">
    <property type="protein sequence ID" value="BAG65552.1"/>
    <property type="molecule type" value="mRNA"/>
</dbReference>
<dbReference type="EMBL" id="AC091172">
    <property type="status" value="NOT_ANNOTATED_CDS"/>
    <property type="molecule type" value="Genomic_DNA"/>
</dbReference>
<dbReference type="EMBL" id="AC125257">
    <property type="status" value="NOT_ANNOTATED_CDS"/>
    <property type="molecule type" value="Genomic_DNA"/>
</dbReference>
<dbReference type="EMBL" id="BC006195">
    <property type="protein sequence ID" value="AAH06195.1"/>
    <property type="molecule type" value="mRNA"/>
</dbReference>
<dbReference type="CCDS" id="CCDS11412.1">
    <molecule id="P53396-1"/>
</dbReference>
<dbReference type="CCDS" id="CCDS11413.1">
    <molecule id="P53396-2"/>
</dbReference>
<dbReference type="PIR" id="S21173">
    <property type="entry name" value="S21173"/>
</dbReference>
<dbReference type="RefSeq" id="NP_001087.2">
    <molecule id="P53396-1"/>
    <property type="nucleotide sequence ID" value="NM_001096.2"/>
</dbReference>
<dbReference type="RefSeq" id="NP_001290203.1">
    <property type="nucleotide sequence ID" value="NM_001303274.1"/>
</dbReference>
<dbReference type="RefSeq" id="NP_001290204.1">
    <property type="nucleotide sequence ID" value="NM_001303275.1"/>
</dbReference>
<dbReference type="RefSeq" id="NP_942127.1">
    <molecule id="P53396-2"/>
    <property type="nucleotide sequence ID" value="NM_198830.2"/>
</dbReference>
<dbReference type="RefSeq" id="XP_005257452.1">
    <molecule id="P53396-1"/>
    <property type="nucleotide sequence ID" value="XM_005257395.2"/>
</dbReference>
<dbReference type="RefSeq" id="XP_016880177.1">
    <property type="nucleotide sequence ID" value="XM_017024688.1"/>
</dbReference>
<dbReference type="PDB" id="3MWD">
    <property type="method" value="X-ray"/>
    <property type="resolution" value="2.10 A"/>
    <property type="chains" value="A=1-425, B=487-820"/>
</dbReference>
<dbReference type="PDB" id="3MWE">
    <property type="method" value="X-ray"/>
    <property type="resolution" value="2.20 A"/>
    <property type="chains" value="A=1-425, B=487-821"/>
</dbReference>
<dbReference type="PDB" id="3PFF">
    <property type="method" value="X-ray"/>
    <property type="resolution" value="2.30 A"/>
    <property type="chains" value="A=1-817"/>
</dbReference>
<dbReference type="PDB" id="5TDE">
    <property type="method" value="X-ray"/>
    <property type="resolution" value="1.70 A"/>
    <property type="chains" value="A=1-425, B=487-810"/>
</dbReference>
<dbReference type="PDB" id="5TDF">
    <property type="method" value="X-ray"/>
    <property type="resolution" value="1.80 A"/>
    <property type="chains" value="A=1-425, B=487-810"/>
</dbReference>
<dbReference type="PDB" id="5TDM">
    <property type="method" value="X-ray"/>
    <property type="resolution" value="2.10 A"/>
    <property type="chains" value="A=1-425, B=487-810"/>
</dbReference>
<dbReference type="PDB" id="5TDZ">
    <property type="method" value="X-ray"/>
    <property type="resolution" value="2.00 A"/>
    <property type="chains" value="A=1-425, B=487-810"/>
</dbReference>
<dbReference type="PDB" id="5TE1">
    <property type="method" value="X-ray"/>
    <property type="resolution" value="2.25 A"/>
    <property type="chains" value="A/B=1-817"/>
</dbReference>
<dbReference type="PDB" id="5TEQ">
    <property type="method" value="X-ray"/>
    <property type="resolution" value="2.30 A"/>
    <property type="chains" value="A/B=1-817"/>
</dbReference>
<dbReference type="PDB" id="5TES">
    <property type="method" value="X-ray"/>
    <property type="resolution" value="2.40 A"/>
    <property type="chains" value="A=1-425, B=487-810"/>
</dbReference>
<dbReference type="PDB" id="5TET">
    <property type="method" value="X-ray"/>
    <property type="resolution" value="2.20 A"/>
    <property type="chains" value="A=1-425, B=487-810"/>
</dbReference>
<dbReference type="PDB" id="6HXH">
    <property type="method" value="X-ray"/>
    <property type="resolution" value="3.30 A"/>
    <property type="chains" value="A/B/C/D/E/F/G/H=1-424, A/B/C/D/E/F/G/H=488-1101"/>
</dbReference>
<dbReference type="PDB" id="6HXK">
    <property type="method" value="X-ray"/>
    <property type="resolution" value="1.85 A"/>
    <property type="chains" value="A/B/C/D=836-1101"/>
</dbReference>
<dbReference type="PDB" id="6HXL">
    <property type="method" value="X-ray"/>
    <property type="resolution" value="1.35 A"/>
    <property type="chains" value="A/B/C/D/E/F/G/H=836-1101"/>
</dbReference>
<dbReference type="PDB" id="6HXM">
    <property type="method" value="X-ray"/>
    <property type="resolution" value="1.30 A"/>
    <property type="chains" value="A/B=836-1101"/>
</dbReference>
<dbReference type="PDB" id="6O0H">
    <property type="method" value="EM"/>
    <property type="resolution" value="3.67 A"/>
    <property type="chains" value="A/B/C/D=1-1101"/>
</dbReference>
<dbReference type="PDB" id="6POE">
    <property type="method" value="EM"/>
    <property type="resolution" value="3.50 A"/>
    <property type="chains" value="A/B/C/D=1-1101"/>
</dbReference>
<dbReference type="PDB" id="6POF">
    <property type="method" value="EM"/>
    <property type="resolution" value="4.30 A"/>
    <property type="chains" value="A/B/C/D=1-1101"/>
</dbReference>
<dbReference type="PDB" id="6QFB">
    <property type="method" value="X-ray"/>
    <property type="resolution" value="3.25 A"/>
    <property type="chains" value="A/B/C/D=1-1101"/>
</dbReference>
<dbReference type="PDB" id="6UI9">
    <property type="method" value="EM"/>
    <property type="resolution" value="3.10 A"/>
    <property type="chains" value="A/B/C/D=1-1101"/>
</dbReference>
<dbReference type="PDB" id="6UIA">
    <property type="method" value="EM"/>
    <property type="resolution" value="4.30 A"/>
    <property type="chains" value="A/B/C/D=1-1101"/>
</dbReference>
<dbReference type="PDB" id="6UUW">
    <property type="method" value="EM"/>
    <property type="resolution" value="2.85 A"/>
    <property type="chains" value="A/B/C/D=1-1101"/>
</dbReference>
<dbReference type="PDB" id="6UUZ">
    <property type="method" value="EM"/>
    <property type="resolution" value="3.00 A"/>
    <property type="chains" value="A/B/C/D=1-1100"/>
</dbReference>
<dbReference type="PDB" id="6UV5">
    <property type="method" value="EM"/>
    <property type="resolution" value="3.40 A"/>
    <property type="chains" value="A/B/C/D=1-1100"/>
</dbReference>
<dbReference type="PDB" id="6Z2H">
    <property type="method" value="X-ray"/>
    <property type="resolution" value="1.80 A"/>
    <property type="chains" value="A/B/C/D=836-1101"/>
</dbReference>
<dbReference type="PDB" id="7LIW">
    <property type="method" value="EM"/>
    <property type="resolution" value="2.85 A"/>
    <property type="chains" value="A/B/C/D=1-1101"/>
</dbReference>
<dbReference type="PDB" id="7LJ9">
    <property type="method" value="EM"/>
    <property type="resolution" value="3.00 A"/>
    <property type="chains" value="A/B/C/D=1-1101"/>
</dbReference>
<dbReference type="PDB" id="7LLA">
    <property type="method" value="EM"/>
    <property type="resolution" value="2.97 A"/>
    <property type="chains" value="A/B/C/D=1-1101"/>
</dbReference>
<dbReference type="PDB" id="7RIG">
    <property type="method" value="EM"/>
    <property type="resolution" value="2.20 A"/>
    <property type="chains" value="A/B/C/D=1-1101"/>
</dbReference>
<dbReference type="PDB" id="7RKZ">
    <property type="method" value="EM"/>
    <property type="resolution" value="2.60 A"/>
    <property type="chains" value="A/B/C/D=1-1101"/>
</dbReference>
<dbReference type="PDB" id="7RMP">
    <property type="method" value="EM"/>
    <property type="resolution" value="2.70 A"/>
    <property type="chains" value="A/B/C/D=1-1101"/>
</dbReference>
<dbReference type="PDB" id="8G1E">
    <property type="method" value="EM"/>
    <property type="resolution" value="2.80 A"/>
    <property type="chains" value="A/B/C/D=1-1101"/>
</dbReference>
<dbReference type="PDB" id="8G1F">
    <property type="method" value="EM"/>
    <property type="resolution" value="2.40 A"/>
    <property type="chains" value="A/B/C/D=1-1101"/>
</dbReference>
<dbReference type="PDB" id="8G5C">
    <property type="method" value="EM"/>
    <property type="resolution" value="2.20 A"/>
    <property type="chains" value="A/B/C/D=1-1101"/>
</dbReference>
<dbReference type="PDB" id="8G5D">
    <property type="method" value="EM"/>
    <property type="resolution" value="2.50 A"/>
    <property type="chains" value="A/B/C/D=1-1101"/>
</dbReference>
<dbReference type="PDBsum" id="3MWD"/>
<dbReference type="PDBsum" id="3MWE"/>
<dbReference type="PDBsum" id="3PFF"/>
<dbReference type="PDBsum" id="5TDE"/>
<dbReference type="PDBsum" id="5TDF"/>
<dbReference type="PDBsum" id="5TDM"/>
<dbReference type="PDBsum" id="5TDZ"/>
<dbReference type="PDBsum" id="5TE1"/>
<dbReference type="PDBsum" id="5TEQ"/>
<dbReference type="PDBsum" id="5TES"/>
<dbReference type="PDBsum" id="5TET"/>
<dbReference type="PDBsum" id="6HXH"/>
<dbReference type="PDBsum" id="6HXK"/>
<dbReference type="PDBsum" id="6HXL"/>
<dbReference type="PDBsum" id="6HXM"/>
<dbReference type="PDBsum" id="6O0H"/>
<dbReference type="PDBsum" id="6POE"/>
<dbReference type="PDBsum" id="6POF"/>
<dbReference type="PDBsum" id="6QFB"/>
<dbReference type="PDBsum" id="6UI9"/>
<dbReference type="PDBsum" id="6UIA"/>
<dbReference type="PDBsum" id="6UUW"/>
<dbReference type="PDBsum" id="6UUZ"/>
<dbReference type="PDBsum" id="6UV5"/>
<dbReference type="PDBsum" id="6Z2H"/>
<dbReference type="PDBsum" id="7LIW"/>
<dbReference type="PDBsum" id="7LJ9"/>
<dbReference type="PDBsum" id="7LLA"/>
<dbReference type="PDBsum" id="7RIG"/>
<dbReference type="PDBsum" id="7RKZ"/>
<dbReference type="PDBsum" id="7RMP"/>
<dbReference type="PDBsum" id="8G1E"/>
<dbReference type="PDBsum" id="8G1F"/>
<dbReference type="PDBsum" id="8G5C"/>
<dbReference type="PDBsum" id="8G5D"/>
<dbReference type="EMDB" id="EMD-0567"/>
<dbReference type="EMDB" id="EMD-20413"/>
<dbReference type="EMDB" id="EMD-20414"/>
<dbReference type="EMDB" id="EMD-20783"/>
<dbReference type="EMDB" id="EMD-20784"/>
<dbReference type="EMDB" id="EMD-20902"/>
<dbReference type="EMDB" id="EMD-20903"/>
<dbReference type="EMDB" id="EMD-20904"/>
<dbReference type="EMDB" id="EMD-23387"/>
<dbReference type="EMDB" id="EMD-23389"/>
<dbReference type="EMDB" id="EMD-23413"/>
<dbReference type="EMDB" id="EMD-24479"/>
<dbReference type="EMDB" id="EMD-24511"/>
<dbReference type="EMDB" id="EMD-24577"/>
<dbReference type="EMDB" id="EMD-29668"/>
<dbReference type="EMDB" id="EMD-29669"/>
<dbReference type="EMDB" id="EMD-29739"/>
<dbReference type="EMDB" id="EMD-29740"/>
<dbReference type="SASBDB" id="P53396"/>
<dbReference type="SMR" id="P53396"/>
<dbReference type="BioGRID" id="106563">
    <property type="interactions" value="344"/>
</dbReference>
<dbReference type="CORUM" id="P53396"/>
<dbReference type="FunCoup" id="P53396">
    <property type="interactions" value="2558"/>
</dbReference>
<dbReference type="IntAct" id="P53396">
    <property type="interactions" value="82"/>
</dbReference>
<dbReference type="MINT" id="P53396"/>
<dbReference type="STRING" id="9606.ENSP00000466259"/>
<dbReference type="BindingDB" id="P53396"/>
<dbReference type="ChEMBL" id="CHEMBL3720"/>
<dbReference type="DrugBank" id="DB11936">
    <property type="generic name" value="Bempedoic acid"/>
</dbReference>
<dbReference type="DrugCentral" id="P53396"/>
<dbReference type="GuidetoPHARMACOLOGY" id="3245"/>
<dbReference type="SwissLipids" id="SLP:000000779"/>
<dbReference type="CarbonylDB" id="P53396"/>
<dbReference type="GlyGen" id="P53396">
    <property type="glycosylation" value="5 sites, 1 O-linked glycan (3 sites)"/>
</dbReference>
<dbReference type="iPTMnet" id="P53396"/>
<dbReference type="MetOSite" id="P53396"/>
<dbReference type="PhosphoSitePlus" id="P53396"/>
<dbReference type="SwissPalm" id="P53396"/>
<dbReference type="BioMuta" id="ACLY"/>
<dbReference type="DMDM" id="116241237"/>
<dbReference type="CPTAC" id="CPTAC-2715"/>
<dbReference type="jPOST" id="P53396"/>
<dbReference type="MassIVE" id="P53396"/>
<dbReference type="PaxDb" id="9606-ENSP00000253792"/>
<dbReference type="PeptideAtlas" id="P53396"/>
<dbReference type="ProteomicsDB" id="56581">
    <molecule id="P53396-1"/>
</dbReference>
<dbReference type="ProteomicsDB" id="56582">
    <molecule id="P53396-2"/>
</dbReference>
<dbReference type="ProteomicsDB" id="5912"/>
<dbReference type="Pumba" id="P53396"/>
<dbReference type="Antibodypedia" id="3578">
    <property type="antibodies" value="567 antibodies from 37 providers"/>
</dbReference>
<dbReference type="DNASU" id="47"/>
<dbReference type="Ensembl" id="ENST00000352035.7">
    <molecule id="P53396-1"/>
    <property type="protein sequence ID" value="ENSP00000253792.2"/>
    <property type="gene ID" value="ENSG00000131473.17"/>
</dbReference>
<dbReference type="Ensembl" id="ENST00000353196.5">
    <molecule id="P53396-2"/>
    <property type="protein sequence ID" value="ENSP00000345398.1"/>
    <property type="gene ID" value="ENSG00000131473.17"/>
</dbReference>
<dbReference type="Ensembl" id="ENST00000393896.6">
    <molecule id="P53396-2"/>
    <property type="protein sequence ID" value="ENSP00000377474.1"/>
    <property type="gene ID" value="ENSG00000131473.17"/>
</dbReference>
<dbReference type="Ensembl" id="ENST00000537919.5">
    <molecule id="P53396-3"/>
    <property type="protein sequence ID" value="ENSP00000445349.1"/>
    <property type="gene ID" value="ENSG00000131473.17"/>
</dbReference>
<dbReference type="Ensembl" id="ENST00000590151.5">
    <molecule id="P53396-1"/>
    <property type="protein sequence ID" value="ENSP00000466259.1"/>
    <property type="gene ID" value="ENSG00000131473.17"/>
</dbReference>
<dbReference type="GeneID" id="47"/>
<dbReference type="KEGG" id="hsa:47"/>
<dbReference type="MANE-Select" id="ENST00000352035.7">
    <property type="protein sequence ID" value="ENSP00000253792.2"/>
    <property type="RefSeq nucleotide sequence ID" value="NM_001096.3"/>
    <property type="RefSeq protein sequence ID" value="NP_001087.2"/>
</dbReference>
<dbReference type="UCSC" id="uc002hyg.4">
    <molecule id="P53396-1"/>
    <property type="organism name" value="human"/>
</dbReference>
<dbReference type="AGR" id="HGNC:115"/>
<dbReference type="CTD" id="47"/>
<dbReference type="DisGeNET" id="47"/>
<dbReference type="GeneCards" id="ACLY"/>
<dbReference type="HGNC" id="HGNC:115">
    <property type="gene designation" value="ACLY"/>
</dbReference>
<dbReference type="HPA" id="ENSG00000131473">
    <property type="expression patterns" value="Low tissue specificity"/>
</dbReference>
<dbReference type="MIM" id="108728">
    <property type="type" value="gene"/>
</dbReference>
<dbReference type="neXtProt" id="NX_P53396"/>
<dbReference type="OpenTargets" id="ENSG00000131473"/>
<dbReference type="PharmGKB" id="PA24441"/>
<dbReference type="VEuPathDB" id="HostDB:ENSG00000131473"/>
<dbReference type="eggNOG" id="KOG1254">
    <property type="taxonomic scope" value="Eukaryota"/>
</dbReference>
<dbReference type="GeneTree" id="ENSGT00940000154881"/>
<dbReference type="HOGENOM" id="CLU_006587_2_0_1"/>
<dbReference type="InParanoid" id="P53396"/>
<dbReference type="OMA" id="MDYAWAK"/>
<dbReference type="OrthoDB" id="3261737at2759"/>
<dbReference type="PAN-GO" id="P53396">
    <property type="GO annotations" value="4 GO annotations based on evolutionary models"/>
</dbReference>
<dbReference type="PhylomeDB" id="P53396"/>
<dbReference type="TreeFam" id="TF300560"/>
<dbReference type="BioCyc" id="MetaCyc:HS05535-MONOMER"/>
<dbReference type="BRENDA" id="2.3.3.8">
    <property type="organism ID" value="2681"/>
</dbReference>
<dbReference type="PathwayCommons" id="P53396"/>
<dbReference type="Reactome" id="R-HSA-163765">
    <property type="pathway name" value="ChREBP activates metabolic gene expression"/>
</dbReference>
<dbReference type="Reactome" id="R-HSA-6798695">
    <property type="pathway name" value="Neutrophil degranulation"/>
</dbReference>
<dbReference type="Reactome" id="R-HSA-75105">
    <property type="pathway name" value="Fatty acyl-CoA biosynthesis"/>
</dbReference>
<dbReference type="SABIO-RK" id="P53396"/>
<dbReference type="SignaLink" id="P53396"/>
<dbReference type="SIGNOR" id="P53396"/>
<dbReference type="BioGRID-ORCS" id="47">
    <property type="hits" value="321 hits in 1165 CRISPR screens"/>
</dbReference>
<dbReference type="CD-CODE" id="91857CE7">
    <property type="entry name" value="Nucleolus"/>
</dbReference>
<dbReference type="CD-CODE" id="FB4E32DD">
    <property type="entry name" value="Presynaptic clusters and postsynaptic densities"/>
</dbReference>
<dbReference type="ChiTaRS" id="ACLY">
    <property type="organism name" value="human"/>
</dbReference>
<dbReference type="EvolutionaryTrace" id="P53396"/>
<dbReference type="GenomeRNAi" id="47"/>
<dbReference type="Pharos" id="P53396">
    <property type="development level" value="Tclin"/>
</dbReference>
<dbReference type="PRO" id="PR:P53396"/>
<dbReference type="Proteomes" id="UP000005640">
    <property type="component" value="Chromosome 17"/>
</dbReference>
<dbReference type="RNAct" id="P53396">
    <property type="molecule type" value="protein"/>
</dbReference>
<dbReference type="Bgee" id="ENSG00000131473">
    <property type="expression patterns" value="Expressed in islet of Langerhans and 212 other cell types or tissues"/>
</dbReference>
<dbReference type="ExpressionAtlas" id="P53396">
    <property type="expression patterns" value="baseline and differential"/>
</dbReference>
<dbReference type="GO" id="GO:0035578">
    <property type="term" value="C:azurophil granule lumen"/>
    <property type="evidence" value="ECO:0000304"/>
    <property type="project" value="Reactome"/>
</dbReference>
<dbReference type="GO" id="GO:0036064">
    <property type="term" value="C:ciliary basal body"/>
    <property type="evidence" value="ECO:0000314"/>
    <property type="project" value="HPA"/>
</dbReference>
<dbReference type="GO" id="GO:0005829">
    <property type="term" value="C:cytosol"/>
    <property type="evidence" value="ECO:0000314"/>
    <property type="project" value="HPA"/>
</dbReference>
<dbReference type="GO" id="GO:0070062">
    <property type="term" value="C:extracellular exosome"/>
    <property type="evidence" value="ECO:0007005"/>
    <property type="project" value="UniProtKB"/>
</dbReference>
<dbReference type="GO" id="GO:0005576">
    <property type="term" value="C:extracellular region"/>
    <property type="evidence" value="ECO:0000304"/>
    <property type="project" value="Reactome"/>
</dbReference>
<dbReference type="GO" id="GO:1904813">
    <property type="term" value="C:ficolin-1-rich granule lumen"/>
    <property type="evidence" value="ECO:0000304"/>
    <property type="project" value="Reactome"/>
</dbReference>
<dbReference type="GO" id="GO:0016020">
    <property type="term" value="C:membrane"/>
    <property type="evidence" value="ECO:0007005"/>
    <property type="project" value="UniProtKB"/>
</dbReference>
<dbReference type="GO" id="GO:0005654">
    <property type="term" value="C:nucleoplasm"/>
    <property type="evidence" value="ECO:0000314"/>
    <property type="project" value="HPA"/>
</dbReference>
<dbReference type="GO" id="GO:0005524">
    <property type="term" value="F:ATP binding"/>
    <property type="evidence" value="ECO:0000304"/>
    <property type="project" value="BHF-UCL"/>
</dbReference>
<dbReference type="GO" id="GO:0003878">
    <property type="term" value="F:ATP citrate synthase activity"/>
    <property type="evidence" value="ECO:0000314"/>
    <property type="project" value="UniProtKB"/>
</dbReference>
<dbReference type="GO" id="GO:0046872">
    <property type="term" value="F:metal ion binding"/>
    <property type="evidence" value="ECO:0007669"/>
    <property type="project" value="UniProtKB-KW"/>
</dbReference>
<dbReference type="GO" id="GO:0006085">
    <property type="term" value="P:acetyl-CoA biosynthetic process"/>
    <property type="evidence" value="ECO:0000314"/>
    <property type="project" value="BHF-UCL"/>
</dbReference>
<dbReference type="GO" id="GO:0006695">
    <property type="term" value="P:cholesterol biosynthetic process"/>
    <property type="evidence" value="ECO:0000304"/>
    <property type="project" value="BHF-UCL"/>
</dbReference>
<dbReference type="GO" id="GO:0006101">
    <property type="term" value="P:citrate metabolic process"/>
    <property type="evidence" value="ECO:0000314"/>
    <property type="project" value="BHF-UCL"/>
</dbReference>
<dbReference type="GO" id="GO:0015936">
    <property type="term" value="P:coenzyme A metabolic process"/>
    <property type="evidence" value="ECO:0000304"/>
    <property type="project" value="BHF-UCL"/>
</dbReference>
<dbReference type="GO" id="GO:0006633">
    <property type="term" value="P:fatty acid biosynthetic process"/>
    <property type="evidence" value="ECO:0000314"/>
    <property type="project" value="UniProt"/>
</dbReference>
<dbReference type="GO" id="GO:0008610">
    <property type="term" value="P:lipid biosynthetic process"/>
    <property type="evidence" value="ECO:0000314"/>
    <property type="project" value="UniProtKB"/>
</dbReference>
<dbReference type="GO" id="GO:0110076">
    <property type="term" value="P:negative regulation of ferroptosis"/>
    <property type="evidence" value="ECO:0000315"/>
    <property type="project" value="UniProt"/>
</dbReference>
<dbReference type="GO" id="GO:0006107">
    <property type="term" value="P:oxaloacetate metabolic process"/>
    <property type="evidence" value="ECO:0000314"/>
    <property type="project" value="BHF-UCL"/>
</dbReference>
<dbReference type="CDD" id="cd06100">
    <property type="entry name" value="CCL_ACL-C"/>
    <property type="match status" value="1"/>
</dbReference>
<dbReference type="FunFam" id="1.10.230.10:FF:000004">
    <property type="entry name" value="ATP-citrate synthase"/>
    <property type="match status" value="1"/>
</dbReference>
<dbReference type="FunFam" id="3.30.470.110:FF:000001">
    <property type="entry name" value="ATP-citrate synthase"/>
    <property type="match status" value="1"/>
</dbReference>
<dbReference type="FunFam" id="3.40.50.261:FF:000003">
    <property type="entry name" value="ATP-citrate synthase subunit"/>
    <property type="match status" value="1"/>
</dbReference>
<dbReference type="FunFam" id="3.40.50.261:FF:000004">
    <property type="entry name" value="ATP-citrate synthase subunit"/>
    <property type="match status" value="1"/>
</dbReference>
<dbReference type="FunFam" id="3.40.50.720:FF:000024">
    <property type="entry name" value="Probable ATP-citrate synthase"/>
    <property type="match status" value="1"/>
</dbReference>
<dbReference type="Gene3D" id="3.30.470.110">
    <property type="match status" value="1"/>
</dbReference>
<dbReference type="Gene3D" id="1.10.230.10">
    <property type="entry name" value="Cytochrome P450-Terp, domain 2"/>
    <property type="match status" value="1"/>
</dbReference>
<dbReference type="Gene3D" id="3.40.50.720">
    <property type="entry name" value="NAD(P)-binding Rossmann-like Domain"/>
    <property type="match status" value="1"/>
</dbReference>
<dbReference type="Gene3D" id="3.40.50.261">
    <property type="entry name" value="Succinyl-CoA synthetase domains"/>
    <property type="match status" value="2"/>
</dbReference>
<dbReference type="InterPro" id="IPR014608">
    <property type="entry name" value="ATP-citrate_synthase"/>
</dbReference>
<dbReference type="InterPro" id="IPR017440">
    <property type="entry name" value="Cit_synth/succinyl-CoA_lig_AS"/>
</dbReference>
<dbReference type="InterPro" id="IPR032263">
    <property type="entry name" value="Citrate-bd"/>
</dbReference>
<dbReference type="InterPro" id="IPR016143">
    <property type="entry name" value="Citrate_synth-like_sm_a-sub"/>
</dbReference>
<dbReference type="InterPro" id="IPR056749">
    <property type="entry name" value="Citrate_synth_N"/>
</dbReference>
<dbReference type="InterPro" id="IPR002020">
    <property type="entry name" value="Citrate_synthase"/>
</dbReference>
<dbReference type="InterPro" id="IPR036969">
    <property type="entry name" value="Citrate_synthase_sf"/>
</dbReference>
<dbReference type="InterPro" id="IPR033847">
    <property type="entry name" value="Citrt_syn/SCS-alpha_CS"/>
</dbReference>
<dbReference type="InterPro" id="IPR003781">
    <property type="entry name" value="CoA-bd"/>
</dbReference>
<dbReference type="InterPro" id="IPR036291">
    <property type="entry name" value="NAD(P)-bd_dom_sf"/>
</dbReference>
<dbReference type="InterPro" id="IPR017866">
    <property type="entry name" value="Succ-CoA_synthase_bsu_CS"/>
</dbReference>
<dbReference type="InterPro" id="IPR005811">
    <property type="entry name" value="SUCC_ACL_C"/>
</dbReference>
<dbReference type="InterPro" id="IPR016102">
    <property type="entry name" value="Succinyl-CoA_synth-like"/>
</dbReference>
<dbReference type="PANTHER" id="PTHR23118">
    <property type="entry name" value="ATP-CITRATE SYNTHASE"/>
    <property type="match status" value="1"/>
</dbReference>
<dbReference type="PANTHER" id="PTHR23118:SF42">
    <property type="entry name" value="ATP-CITRATE SYNTHASE"/>
    <property type="match status" value="1"/>
</dbReference>
<dbReference type="Pfam" id="PF16114">
    <property type="entry name" value="Citrate_bind"/>
    <property type="match status" value="1"/>
</dbReference>
<dbReference type="Pfam" id="PF00285">
    <property type="entry name" value="Citrate_synt"/>
    <property type="match status" value="1"/>
</dbReference>
<dbReference type="Pfam" id="PF24948">
    <property type="entry name" value="Citrate_synth_N"/>
    <property type="match status" value="1"/>
</dbReference>
<dbReference type="Pfam" id="PF02629">
    <property type="entry name" value="CoA_binding"/>
    <property type="match status" value="1"/>
</dbReference>
<dbReference type="Pfam" id="PF00549">
    <property type="entry name" value="Ligase_CoA"/>
    <property type="match status" value="1"/>
</dbReference>
<dbReference type="PIRSF" id="PIRSF036511">
    <property type="entry name" value="ATP_citrt_syn"/>
    <property type="match status" value="1"/>
</dbReference>
<dbReference type="SMART" id="SM00881">
    <property type="entry name" value="CoA_binding"/>
    <property type="match status" value="1"/>
</dbReference>
<dbReference type="SUPFAM" id="SSF48256">
    <property type="entry name" value="Citrate synthase"/>
    <property type="match status" value="1"/>
</dbReference>
<dbReference type="SUPFAM" id="SSF56059">
    <property type="entry name" value="Glutathione synthetase ATP-binding domain-like"/>
    <property type="match status" value="1"/>
</dbReference>
<dbReference type="SUPFAM" id="SSF51735">
    <property type="entry name" value="NAD(P)-binding Rossmann-fold domains"/>
    <property type="match status" value="1"/>
</dbReference>
<dbReference type="SUPFAM" id="SSF52210">
    <property type="entry name" value="Succinyl-CoA synthetase domains"/>
    <property type="match status" value="1"/>
</dbReference>
<dbReference type="PROSITE" id="PS01216">
    <property type="entry name" value="SUCCINYL_COA_LIG_1"/>
    <property type="match status" value="1"/>
</dbReference>
<dbReference type="PROSITE" id="PS00399">
    <property type="entry name" value="SUCCINYL_COA_LIG_2"/>
    <property type="match status" value="1"/>
</dbReference>
<dbReference type="PROSITE" id="PS01217">
    <property type="entry name" value="SUCCINYL_COA_LIG_3"/>
    <property type="match status" value="1"/>
</dbReference>
<accession>P53396</accession>
<accession>B4DIM0</accession>
<accession>B4E3P0</accession>
<accession>Q13037</accession>
<accession>Q9BRL0</accession>
<evidence type="ECO:0000250" key="1">
    <source>
        <dbReference type="UniProtKB" id="P16638"/>
    </source>
</evidence>
<evidence type="ECO:0000250" key="2">
    <source>
        <dbReference type="UniProtKB" id="Q91V92"/>
    </source>
</evidence>
<evidence type="ECO:0000255" key="3"/>
<evidence type="ECO:0000256" key="4">
    <source>
        <dbReference type="SAM" id="MobiDB-lite"/>
    </source>
</evidence>
<evidence type="ECO:0000269" key="5">
    <source>
    </source>
</evidence>
<evidence type="ECO:0000269" key="6">
    <source>
    </source>
</evidence>
<evidence type="ECO:0000269" key="7">
    <source>
    </source>
</evidence>
<evidence type="ECO:0000269" key="8">
    <source>
    </source>
</evidence>
<evidence type="ECO:0000269" key="9">
    <source>
    </source>
</evidence>
<evidence type="ECO:0000269" key="10">
    <source>
    </source>
</evidence>
<evidence type="ECO:0000269" key="11">
    <source>
    </source>
</evidence>
<evidence type="ECO:0000269" key="12">
    <source>
    </source>
</evidence>
<evidence type="ECO:0000269" key="13">
    <source>
    </source>
</evidence>
<evidence type="ECO:0000269" key="14">
    <source>
    </source>
</evidence>
<evidence type="ECO:0000269" key="15">
    <source>
    </source>
</evidence>
<evidence type="ECO:0000269" key="16">
    <source>
    </source>
</evidence>
<evidence type="ECO:0000269" key="17">
    <source>
    </source>
</evidence>
<evidence type="ECO:0000303" key="18">
    <source>
    </source>
</evidence>
<evidence type="ECO:0000305" key="19"/>
<evidence type="ECO:0000305" key="20">
    <source>
    </source>
</evidence>
<evidence type="ECO:0000305" key="21">
    <source>
    </source>
</evidence>
<evidence type="ECO:0000305" key="22">
    <source>
    </source>
</evidence>
<evidence type="ECO:0000305" key="23">
    <source>
    </source>
</evidence>
<evidence type="ECO:0000305" key="24">
    <source>
    </source>
</evidence>
<evidence type="ECO:0000305" key="25">
    <source>
    </source>
</evidence>
<evidence type="ECO:0007744" key="26">
    <source>
    </source>
</evidence>
<evidence type="ECO:0007744" key="27">
    <source>
    </source>
</evidence>
<evidence type="ECO:0007744" key="28">
    <source>
    </source>
</evidence>
<evidence type="ECO:0007744" key="29">
    <source>
    </source>
</evidence>
<evidence type="ECO:0007744" key="30">
    <source>
    </source>
</evidence>
<evidence type="ECO:0007744" key="31">
    <source>
    </source>
</evidence>
<evidence type="ECO:0007744" key="32">
    <source>
    </source>
</evidence>
<evidence type="ECO:0007744" key="33">
    <source>
    </source>
</evidence>
<evidence type="ECO:0007744" key="34">
    <source>
    </source>
</evidence>
<evidence type="ECO:0007744" key="35">
    <source>
    </source>
</evidence>
<evidence type="ECO:0007744" key="36">
    <source>
    </source>
</evidence>
<evidence type="ECO:0007744" key="37">
    <source>
    </source>
</evidence>
<evidence type="ECO:0007829" key="38">
    <source>
        <dbReference type="PDB" id="3MWD"/>
    </source>
</evidence>
<evidence type="ECO:0007829" key="39">
    <source>
        <dbReference type="PDB" id="3MWE"/>
    </source>
</evidence>
<evidence type="ECO:0007829" key="40">
    <source>
        <dbReference type="PDB" id="5TDE"/>
    </source>
</evidence>
<evidence type="ECO:0007829" key="41">
    <source>
        <dbReference type="PDB" id="5TDZ"/>
    </source>
</evidence>
<evidence type="ECO:0007829" key="42">
    <source>
        <dbReference type="PDB" id="5TE1"/>
    </source>
</evidence>
<evidence type="ECO:0007829" key="43">
    <source>
        <dbReference type="PDB" id="5TEQ"/>
    </source>
</evidence>
<evidence type="ECO:0007829" key="44">
    <source>
        <dbReference type="PDB" id="6HXL"/>
    </source>
</evidence>
<evidence type="ECO:0007829" key="45">
    <source>
        <dbReference type="PDB" id="6HXM"/>
    </source>
</evidence>
<evidence type="ECO:0007829" key="46">
    <source>
        <dbReference type="PDB" id="6QFB"/>
    </source>
</evidence>
<evidence type="ECO:0007829" key="47">
    <source>
        <dbReference type="PDB" id="6UUW"/>
    </source>
</evidence>
<evidence type="ECO:0007829" key="48">
    <source>
        <dbReference type="PDB" id="7LJ9"/>
    </source>
</evidence>
<evidence type="ECO:0007829" key="49">
    <source>
        <dbReference type="PDB" id="7LLA"/>
    </source>
</evidence>
<evidence type="ECO:0007829" key="50">
    <source>
        <dbReference type="PDB" id="7RIG"/>
    </source>
</evidence>
<evidence type="ECO:0007829" key="51">
    <source>
        <dbReference type="PDB" id="7RKZ"/>
    </source>
</evidence>
<evidence type="ECO:0007829" key="52">
    <source>
        <dbReference type="PDB" id="7RMP"/>
    </source>
</evidence>
<evidence type="ECO:0007829" key="53">
    <source>
        <dbReference type="PDB" id="8G5C"/>
    </source>
</evidence>
<gene>
    <name type="primary">ACLY</name>
</gene>
<proteinExistence type="evidence at protein level"/>
<name>ACLY_HUMAN</name>
<organism>
    <name type="scientific">Homo sapiens</name>
    <name type="common">Human</name>
    <dbReference type="NCBI Taxonomy" id="9606"/>
    <lineage>
        <taxon>Eukaryota</taxon>
        <taxon>Metazoa</taxon>
        <taxon>Chordata</taxon>
        <taxon>Craniata</taxon>
        <taxon>Vertebrata</taxon>
        <taxon>Euteleostomi</taxon>
        <taxon>Mammalia</taxon>
        <taxon>Eutheria</taxon>
        <taxon>Euarchontoglires</taxon>
        <taxon>Primates</taxon>
        <taxon>Haplorrhini</taxon>
        <taxon>Catarrhini</taxon>
        <taxon>Hominidae</taxon>
        <taxon>Homo</taxon>
    </lineage>
</organism>
<feature type="chain" id="PRO_0000102781" description="ATP-citrate synthase">
    <location>
        <begin position="1"/>
        <end position="1101"/>
    </location>
</feature>
<feature type="domain" description="ATP-grasp">
    <location>
        <begin position="4"/>
        <end position="265"/>
    </location>
</feature>
<feature type="region of interest" description="Disordered" evidence="4">
    <location>
        <begin position="441"/>
        <end position="487"/>
    </location>
</feature>
<feature type="compositionally biased region" description="Low complexity" evidence="4">
    <location>
        <begin position="441"/>
        <end position="457"/>
    </location>
</feature>
<feature type="compositionally biased region" description="Polar residues" evidence="4">
    <location>
        <begin position="478"/>
        <end position="487"/>
    </location>
</feature>
<feature type="active site" description="Tele-phosphohistidine intermediate" evidence="21">
    <location>
        <position position="760"/>
    </location>
</feature>
<feature type="binding site" evidence="23">
    <location>
        <position position="58"/>
    </location>
    <ligand>
        <name>ATP</name>
        <dbReference type="ChEBI" id="CHEBI:30616"/>
    </ligand>
</feature>
<feature type="binding site" evidence="23">
    <location>
        <position position="66"/>
    </location>
    <ligand>
        <name>ATP</name>
        <dbReference type="ChEBI" id="CHEBI:30616"/>
    </ligand>
</feature>
<feature type="binding site" evidence="23">
    <location>
        <position position="67"/>
    </location>
    <ligand>
        <name>ATP</name>
        <dbReference type="ChEBI" id="CHEBI:30616"/>
    </ligand>
</feature>
<feature type="binding site" evidence="23">
    <location>
        <position position="109"/>
    </location>
    <ligand>
        <name>ATP</name>
        <dbReference type="ChEBI" id="CHEBI:30616"/>
    </ligand>
</feature>
<feature type="binding site" evidence="23">
    <location>
        <position position="111"/>
    </location>
    <ligand>
        <name>ATP</name>
        <dbReference type="ChEBI" id="CHEBI:30616"/>
    </ligand>
</feature>
<feature type="binding site" evidence="23">
    <location>
        <position position="118"/>
    </location>
    <ligand>
        <name>ATP</name>
        <dbReference type="ChEBI" id="CHEBI:30616"/>
    </ligand>
</feature>
<feature type="binding site" evidence="23">
    <location>
        <position position="216"/>
    </location>
    <ligand>
        <name>ATP</name>
        <dbReference type="ChEBI" id="CHEBI:30616"/>
    </ligand>
</feature>
<feature type="binding site" evidence="10 11">
    <location>
        <position position="257"/>
    </location>
    <ligand>
        <name>Mg(2+)</name>
        <dbReference type="ChEBI" id="CHEBI:18420"/>
    </ligand>
</feature>
<feature type="binding site" evidence="10 11">
    <location>
        <position position="260"/>
    </location>
    <ligand>
        <name>Mg(2+)</name>
        <dbReference type="ChEBI" id="CHEBI:18420"/>
    </ligand>
</feature>
<feature type="binding site" evidence="10 11">
    <location>
        <position position="262"/>
    </location>
    <ligand>
        <name>Mg(2+)</name>
        <dbReference type="ChEBI" id="CHEBI:18420"/>
    </ligand>
</feature>
<feature type="binding site" evidence="10">
    <location>
        <position position="309"/>
    </location>
    <ligand>
        <name>citrate</name>
        <dbReference type="ChEBI" id="CHEBI:16947"/>
    </ligand>
</feature>
<feature type="binding site" evidence="10">
    <location>
        <position position="346"/>
    </location>
    <ligand>
        <name>citrate</name>
        <dbReference type="ChEBI" id="CHEBI:16947"/>
    </ligand>
</feature>
<feature type="binding site" evidence="10">
    <location>
        <position position="348"/>
    </location>
    <ligand>
        <name>citrate</name>
        <dbReference type="ChEBI" id="CHEBI:16947"/>
    </ligand>
</feature>
<feature type="binding site" evidence="10">
    <location>
        <position position="364"/>
    </location>
    <ligand>
        <name>citrate</name>
        <dbReference type="ChEBI" id="CHEBI:16947"/>
    </ligand>
</feature>
<feature type="binding site" evidence="10">
    <location>
        <position position="379"/>
    </location>
    <ligand>
        <name>citrate</name>
        <dbReference type="ChEBI" id="CHEBI:16947"/>
    </ligand>
</feature>
<feature type="binding site" evidence="3">
    <location>
        <begin position="779"/>
        <end position="789"/>
    </location>
    <ligand>
        <name>CoA</name>
        <dbReference type="ChEBI" id="CHEBI:57287"/>
    </ligand>
</feature>
<feature type="modified residue" description="Phosphotyrosine" evidence="26">
    <location>
        <position position="131"/>
    </location>
</feature>
<feature type="modified residue" description="Phosphoserine" evidence="2">
    <location>
        <position position="263"/>
    </location>
</feature>
<feature type="modified residue" description="Phosphothreonine" evidence="1">
    <location>
        <position position="447"/>
    </location>
</feature>
<feature type="modified residue" description="Phosphoserine" evidence="1">
    <location>
        <position position="451"/>
    </location>
</feature>
<feature type="modified residue" description="Phosphoserine; by PKA and PKB/AKT1 or PKB/AKT2 or BCKDK" evidence="14 29 34 35 36 37">
    <location>
        <position position="455"/>
    </location>
</feature>
<feature type="modified residue" description="Phosphoserine" evidence="36">
    <location>
        <position position="459"/>
    </location>
</feature>
<feature type="modified residue" description="Phosphoserine" evidence="27 28 29 30 31 33 34 35 36 37">
    <location>
        <position position="481"/>
    </location>
</feature>
<feature type="modified residue" description="N6-acetyllysine; alternate" evidence="12">
    <location>
        <position position="540"/>
    </location>
</feature>
<feature type="modified residue" description="N6-acetyllysine; alternate" evidence="12 32">
    <location>
        <position position="546"/>
    </location>
</feature>
<feature type="modified residue" description="N6-acetyllysine; alternate" evidence="12 32">
    <location>
        <position position="554"/>
    </location>
</feature>
<feature type="modified residue" description="Phosphothreonine" evidence="31">
    <location>
        <position position="639"/>
    </location>
</feature>
<feature type="modified residue" description="Phosphoserine" evidence="31">
    <location>
        <position position="663"/>
    </location>
</feature>
<feature type="modified residue" description="Phosphotyrosine" evidence="26 31">
    <location>
        <position position="682"/>
    </location>
</feature>
<feature type="modified residue" description="Phosphoserine" evidence="31">
    <location>
        <position position="839"/>
    </location>
</feature>
<feature type="modified residue" description="N6-acetyllysine" evidence="32">
    <location>
        <position position="948"/>
    </location>
</feature>
<feature type="modified residue" description="N6-acetyllysine" evidence="32">
    <location>
        <position position="968"/>
    </location>
</feature>
<feature type="modified residue" description="N6-acetyllysine" evidence="2">
    <location>
        <position position="978"/>
    </location>
</feature>
<feature type="modified residue" description="N6-acetyllysine" evidence="32">
    <location>
        <position position="1077"/>
    </location>
</feature>
<feature type="modified residue" description="Phosphoserine" evidence="29 31">
    <location>
        <position position="1100"/>
    </location>
</feature>
<feature type="cross-link" description="Glycyl lysine isopeptide (Lys-Gly) (interchain with G-Cter in ubiquitin); alternate" evidence="13 24">
    <location>
        <position position="540"/>
    </location>
</feature>
<feature type="cross-link" description="Glycyl lysine isopeptide (Lys-Gly) (interchain with G-Cter in ubiquitin); alternate" evidence="13 24">
    <location>
        <position position="546"/>
    </location>
</feature>
<feature type="cross-link" description="Glycyl lysine isopeptide (Lys-Gly) (interchain with G-Cter in ubiquitin); alternate" evidence="13 24">
    <location>
        <position position="554"/>
    </location>
</feature>
<feature type="splice variant" id="VSP_057230" description="In isoform 3." evidence="18">
    <location>
        <begin position="95"/>
        <end position="355"/>
    </location>
</feature>
<feature type="splice variant" id="VSP_042201" description="In isoform 2 and isoform 3." evidence="18">
    <location>
        <begin position="476"/>
        <end position="485"/>
    </location>
</feature>
<feature type="sequence variant" id="VAR_028230" description="In dbSNP:rs2304497." evidence="6 7 17">
    <original>E</original>
    <variation>D</variation>
    <location>
        <position position="175"/>
    </location>
</feature>
<feature type="mutagenesis site" description="Decreased acetylation and increased de novo lipid synthesis; when associated with R,Q-546 and R,Q-554. Abolished ubiquitination by the BCR(KLHL25)complex; when associated with R-546 and R-554." evidence="12 13">
    <original>K</original>
    <variation>R</variation>
    <variation>Q</variation>
    <location>
        <position position="540"/>
    </location>
</feature>
<feature type="mutagenesis site" description="Decreased acetylation and increased de novo lipid synthesis; when associated with R,Q-540 and R,Q-554. Abolished ubiquitination by the BCR(KLHL25) complex; when associated with R-540 and R-554." evidence="12 13">
    <original>K</original>
    <variation>R</variation>
    <variation>Q</variation>
    <location>
        <position position="546"/>
    </location>
</feature>
<feature type="mutagenesis site" description="Decreased acetylation and increased de novo lipid synthesis; when associated with R,Q-540 and R,Q-546. Abolished ubiquitination by the BCR(KLHL25) complex; when associated with R-540 and R-546." evidence="12 13">
    <original>K</original>
    <variation>R</variation>
    <variation>Q</variation>
    <location>
        <position position="554"/>
    </location>
</feature>
<feature type="mutagenesis site" description="Reduced enzyme activity." evidence="6">
    <original>H</original>
    <variation>A</variation>
    <location>
        <position position="760"/>
    </location>
</feature>
<feature type="sequence conflict" description="In Ref. 1; CAA45614." evidence="19" ref="1">
    <original>N</original>
    <variation>D</variation>
    <location>
        <position position="75"/>
    </location>
</feature>
<feature type="sequence conflict" description="In Ref. 1; CAA45614." evidence="19" ref="1">
    <original>V</original>
    <variation>A</variation>
    <location>
        <position position="111"/>
    </location>
</feature>
<feature type="sequence conflict" description="In Ref. 1; CAA45614." evidence="19" ref="1">
    <original>E</original>
    <variation>V</variation>
    <location>
        <position position="245"/>
    </location>
</feature>
<feature type="sequence conflict" description="In Ref. 1; CAA45614." evidence="19" ref="1">
    <original>LGHRP</original>
    <variation>WAPA</variation>
    <location>
        <begin position="419"/>
        <end position="423"/>
    </location>
</feature>
<feature type="sequence conflict" description="In Ref. 1; CAA45614." evidence="19" ref="1">
    <original>SGS</original>
    <variation>QRE</variation>
    <location>
        <begin position="442"/>
        <end position="444"/>
    </location>
</feature>
<feature type="sequence conflict" description="In Ref. 1; CAA45614." evidence="19" ref="1">
    <original>SES</original>
    <variation>YESMVDEV</variation>
    <location>
        <begin position="457"/>
        <end position="459"/>
    </location>
</feature>
<feature type="sequence conflict" description="In Ref. 1; CAA45614." evidence="19" ref="1">
    <original>RPGS</original>
    <variation>PQAA</variation>
    <location>
        <begin position="653"/>
        <end position="656"/>
    </location>
</feature>
<feature type="sequence conflict" description="In Ref. 1; CAA45614." evidence="19" ref="1">
    <original>C</original>
    <variation>S</variation>
    <location>
        <position position="728"/>
    </location>
</feature>
<feature type="sequence conflict" description="In Ref. 1; CAA45614." evidence="19" ref="1">
    <original>V</original>
    <variation>A</variation>
    <location>
        <position position="872"/>
    </location>
</feature>
<feature type="sequence conflict" description="In Ref. 1; CAA45614." evidence="19" ref="1">
    <original>AGKD</original>
    <variation>TAVE</variation>
    <location>
        <begin position="916"/>
        <end position="919"/>
    </location>
</feature>
<feature type="strand" evidence="40">
    <location>
        <begin position="3"/>
        <end position="6"/>
    </location>
</feature>
<feature type="helix" evidence="40">
    <location>
        <begin position="8"/>
        <end position="18"/>
    </location>
</feature>
<feature type="turn" evidence="43">
    <location>
        <begin position="26"/>
        <end position="29"/>
    </location>
</feature>
<feature type="strand" evidence="40">
    <location>
        <begin position="32"/>
        <end position="34"/>
    </location>
</feature>
<feature type="strand" evidence="49">
    <location>
        <begin position="36"/>
        <end position="38"/>
    </location>
</feature>
<feature type="helix" evidence="40">
    <location>
        <begin position="40"/>
        <end position="46"/>
    </location>
</feature>
<feature type="helix" evidence="40">
    <location>
        <begin position="48"/>
        <end position="51"/>
    </location>
</feature>
<feature type="strand" evidence="40">
    <location>
        <begin position="55"/>
        <end position="59"/>
    </location>
</feature>
<feature type="turn" evidence="48">
    <location>
        <begin position="60"/>
        <end position="62"/>
    </location>
</feature>
<feature type="turn" evidence="40">
    <location>
        <begin position="66"/>
        <end position="70"/>
    </location>
</feature>
<feature type="strand" evidence="40">
    <location>
        <begin position="73"/>
        <end position="76"/>
    </location>
</feature>
<feature type="helix" evidence="40">
    <location>
        <begin position="78"/>
        <end position="85"/>
    </location>
</feature>
<feature type="turn" evidence="40">
    <location>
        <begin position="86"/>
        <end position="90"/>
    </location>
</feature>
<feature type="strand" evidence="40">
    <location>
        <begin position="92"/>
        <end position="95"/>
    </location>
</feature>
<feature type="strand" evidence="40">
    <location>
        <begin position="98"/>
        <end position="101"/>
    </location>
</feature>
<feature type="strand" evidence="40">
    <location>
        <begin position="105"/>
        <end position="109"/>
    </location>
</feature>
<feature type="helix" evidence="40">
    <location>
        <begin position="115"/>
        <end position="117"/>
    </location>
</feature>
<feature type="strand" evidence="40">
    <location>
        <begin position="118"/>
        <end position="126"/>
    </location>
</feature>
<feature type="strand" evidence="40">
    <location>
        <begin position="129"/>
        <end position="136"/>
    </location>
</feature>
<feature type="helix" evidence="39">
    <location>
        <begin position="140"/>
        <end position="142"/>
    </location>
</feature>
<feature type="helix" evidence="38">
    <location>
        <begin position="145"/>
        <end position="148"/>
    </location>
</feature>
<feature type="strand" evidence="40">
    <location>
        <begin position="150"/>
        <end position="155"/>
    </location>
</feature>
<feature type="helix" evidence="40">
    <location>
        <begin position="162"/>
        <end position="168"/>
    </location>
</feature>
<feature type="strand" evidence="50">
    <location>
        <begin position="171"/>
        <end position="173"/>
    </location>
</feature>
<feature type="helix" evidence="40">
    <location>
        <begin position="175"/>
        <end position="177"/>
    </location>
</feature>
<feature type="helix" evidence="40">
    <location>
        <begin position="178"/>
        <end position="194"/>
    </location>
</feature>
<feature type="strand" evidence="40">
    <location>
        <begin position="197"/>
        <end position="208"/>
    </location>
</feature>
<feature type="strand" evidence="40">
    <location>
        <begin position="211"/>
        <end position="214"/>
    </location>
</feature>
<feature type="strand" evidence="40">
    <location>
        <begin position="218"/>
        <end position="222"/>
    </location>
</feature>
<feature type="helix" evidence="40">
    <location>
        <begin position="223"/>
        <end position="225"/>
    </location>
</feature>
<feature type="helix" evidence="40">
    <location>
        <begin position="226"/>
        <end position="233"/>
    </location>
</feature>
<feature type="strand" evidence="38">
    <location>
        <begin position="242"/>
        <end position="244"/>
    </location>
</feature>
<feature type="helix" evidence="40">
    <location>
        <begin position="248"/>
        <end position="258"/>
    </location>
</feature>
<feature type="strand" evidence="40">
    <location>
        <begin position="260"/>
        <end position="269"/>
    </location>
</feature>
<feature type="strand" evidence="40">
    <location>
        <begin position="274"/>
        <end position="277"/>
    </location>
</feature>
<feature type="strand" evidence="41">
    <location>
        <begin position="279"/>
        <end position="281"/>
    </location>
</feature>
<feature type="helix" evidence="40">
    <location>
        <begin position="282"/>
        <end position="294"/>
    </location>
</feature>
<feature type="helix" evidence="40">
    <location>
        <begin position="298"/>
        <end position="300"/>
    </location>
</feature>
<feature type="strand" evidence="40">
    <location>
        <begin position="303"/>
        <end position="309"/>
    </location>
</feature>
<feature type="helix" evidence="40">
    <location>
        <begin position="313"/>
        <end position="327"/>
    </location>
</feature>
<feature type="strand" evidence="41">
    <location>
        <begin position="328"/>
        <end position="330"/>
    </location>
</feature>
<feature type="strand" evidence="40">
    <location>
        <begin position="336"/>
        <end position="340"/>
    </location>
</feature>
<feature type="strand" evidence="51">
    <location>
        <begin position="342"/>
        <end position="344"/>
    </location>
</feature>
<feature type="strand" evidence="40">
    <location>
        <begin position="346"/>
        <end position="348"/>
    </location>
</feature>
<feature type="helix" evidence="40">
    <location>
        <begin position="350"/>
        <end position="363"/>
    </location>
</feature>
<feature type="helix" evidence="40">
    <location>
        <begin position="365"/>
        <end position="370"/>
    </location>
</feature>
<feature type="strand" evidence="40">
    <location>
        <begin position="373"/>
        <end position="378"/>
    </location>
</feature>
<feature type="helix" evidence="40">
    <location>
        <begin position="384"/>
        <end position="398"/>
    </location>
</feature>
<feature type="strand" evidence="40">
    <location>
        <begin position="402"/>
        <end position="405"/>
    </location>
</feature>
<feature type="strand" evidence="52">
    <location>
        <begin position="407"/>
        <end position="409"/>
    </location>
</feature>
<feature type="helix" evidence="40">
    <location>
        <begin position="413"/>
        <end position="418"/>
    </location>
</feature>
<feature type="strand" evidence="51">
    <location>
        <begin position="419"/>
        <end position="422"/>
    </location>
</feature>
<feature type="strand" evidence="47">
    <location>
        <begin position="427"/>
        <end position="429"/>
    </location>
</feature>
<feature type="strand" evidence="40">
    <location>
        <begin position="499"/>
        <end position="503"/>
    </location>
</feature>
<feature type="helix" evidence="40">
    <location>
        <begin position="506"/>
        <end position="518"/>
    </location>
</feature>
<feature type="strand" evidence="40">
    <location>
        <begin position="525"/>
        <end position="530"/>
    </location>
</feature>
<feature type="strand" evidence="40">
    <location>
        <begin position="536"/>
        <end position="543"/>
    </location>
</feature>
<feature type="strand" evidence="40">
    <location>
        <begin position="546"/>
        <end position="555"/>
    </location>
</feature>
<feature type="helix" evidence="40">
    <location>
        <begin position="556"/>
        <end position="562"/>
    </location>
</feature>
<feature type="strand" evidence="40">
    <location>
        <begin position="568"/>
        <end position="571"/>
    </location>
</feature>
<feature type="helix" evidence="40">
    <location>
        <begin position="575"/>
        <end position="585"/>
    </location>
</feature>
<feature type="strand" evidence="40">
    <location>
        <begin position="593"/>
        <end position="596"/>
    </location>
</feature>
<feature type="helix" evidence="40">
    <location>
        <begin position="603"/>
        <end position="616"/>
    </location>
</feature>
<feature type="strand" evidence="40">
    <location>
        <begin position="619"/>
        <end position="621"/>
    </location>
</feature>
<feature type="strand" evidence="42">
    <location>
        <begin position="623"/>
        <end position="625"/>
    </location>
</feature>
<feature type="strand" evidence="40">
    <location>
        <begin position="628"/>
        <end position="630"/>
    </location>
</feature>
<feature type="turn" evidence="40">
    <location>
        <begin position="631"/>
        <end position="633"/>
    </location>
</feature>
<feature type="strand" evidence="40">
    <location>
        <begin position="634"/>
        <end position="636"/>
    </location>
</feature>
<feature type="turn" evidence="40">
    <location>
        <begin position="637"/>
        <end position="640"/>
    </location>
</feature>
<feature type="helix" evidence="40">
    <location>
        <begin position="643"/>
        <end position="648"/>
    </location>
</feature>
<feature type="turn" evidence="40">
    <location>
        <begin position="649"/>
        <end position="652"/>
    </location>
</feature>
<feature type="strand" evidence="40">
    <location>
        <begin position="656"/>
        <end position="662"/>
    </location>
</feature>
<feature type="helix" evidence="40">
    <location>
        <begin position="664"/>
        <end position="677"/>
    </location>
</feature>
<feature type="strand" evidence="40">
    <location>
        <begin position="681"/>
        <end position="686"/>
    </location>
</feature>
<feature type="strand" evidence="40">
    <location>
        <begin position="689"/>
        <end position="692"/>
    </location>
</feature>
<feature type="helix" evidence="40">
    <location>
        <begin position="697"/>
        <end position="705"/>
    </location>
</feature>
<feature type="strand" evidence="40">
    <location>
        <begin position="712"/>
        <end position="722"/>
    </location>
</feature>
<feature type="helix" evidence="40">
    <location>
        <begin position="725"/>
        <end position="732"/>
    </location>
</feature>
<feature type="turn" evidence="50">
    <location>
        <begin position="733"/>
        <end position="735"/>
    </location>
</feature>
<feature type="strand" evidence="40">
    <location>
        <begin position="740"/>
        <end position="745"/>
    </location>
</feature>
<feature type="helix" evidence="40">
    <location>
        <begin position="747"/>
        <end position="751"/>
    </location>
</feature>
<feature type="strand" evidence="41">
    <location>
        <begin position="752"/>
        <end position="754"/>
    </location>
</feature>
<feature type="helix" evidence="46">
    <location>
        <begin position="759"/>
        <end position="762"/>
    </location>
</feature>
<feature type="strand" evidence="46">
    <location>
        <begin position="763"/>
        <end position="765"/>
    </location>
</feature>
<feature type="helix" evidence="40">
    <location>
        <begin position="768"/>
        <end position="770"/>
    </location>
</feature>
<feature type="helix" evidence="40">
    <location>
        <begin position="772"/>
        <end position="782"/>
    </location>
</feature>
<feature type="helix" evidence="40">
    <location>
        <begin position="790"/>
        <end position="792"/>
    </location>
</feature>
<feature type="helix" evidence="40">
    <location>
        <begin position="793"/>
        <end position="806"/>
    </location>
</feature>
<feature type="helix" evidence="50">
    <location>
        <begin position="825"/>
        <end position="830"/>
    </location>
</feature>
<feature type="strand" evidence="47">
    <location>
        <begin position="833"/>
        <end position="835"/>
    </location>
</feature>
<feature type="strand" evidence="44">
    <location>
        <begin position="839"/>
        <end position="842"/>
    </location>
</feature>
<feature type="strand" evidence="45">
    <location>
        <begin position="844"/>
        <end position="846"/>
    </location>
</feature>
<feature type="strand" evidence="45">
    <location>
        <begin position="848"/>
        <end position="851"/>
    </location>
</feature>
<feature type="strand" evidence="52">
    <location>
        <begin position="853"/>
        <end position="856"/>
    </location>
</feature>
<feature type="helix" evidence="45">
    <location>
        <begin position="859"/>
        <end position="864"/>
    </location>
</feature>
<feature type="helix" evidence="45">
    <location>
        <begin position="868"/>
        <end position="878"/>
    </location>
</feature>
<feature type="helix" evidence="45">
    <location>
        <begin position="884"/>
        <end position="896"/>
    </location>
</feature>
<feature type="strand" evidence="45">
    <location>
        <begin position="902"/>
        <end position="904"/>
    </location>
</feature>
<feature type="helix" evidence="45">
    <location>
        <begin position="905"/>
        <end position="915"/>
    </location>
</feature>
<feature type="helix" evidence="45">
    <location>
        <begin position="920"/>
        <end position="928"/>
    </location>
</feature>
<feature type="turn" evidence="45">
    <location>
        <begin position="933"/>
        <end position="935"/>
    </location>
</feature>
<feature type="helix" evidence="45">
    <location>
        <begin position="939"/>
        <end position="952"/>
    </location>
</feature>
<feature type="helix" evidence="45">
    <location>
        <begin position="956"/>
        <end position="966"/>
    </location>
</feature>
<feature type="strand" evidence="53">
    <location>
        <begin position="980"/>
        <end position="982"/>
    </location>
</feature>
<feature type="helix" evidence="45">
    <location>
        <begin position="985"/>
        <end position="997"/>
    </location>
</feature>
<feature type="helix" evidence="45">
    <location>
        <begin position="1002"/>
        <end position="1017"/>
    </location>
</feature>
<feature type="helix" evidence="45">
    <location>
        <begin position="1025"/>
        <end position="1039"/>
    </location>
</feature>
<feature type="strand" evidence="45">
    <location>
        <begin position="1040"/>
        <end position="1043"/>
    </location>
</feature>
<feature type="helix" evidence="45">
    <location>
        <begin position="1045"/>
        <end position="1054"/>
    </location>
</feature>
<feature type="helix" evidence="45">
    <location>
        <begin position="1056"/>
        <end position="1078"/>
    </location>
</feature>
<feature type="helix" evidence="45">
    <location>
        <begin position="1088"/>
        <end position="1090"/>
    </location>
</feature>
<feature type="strand" evidence="44">
    <location>
        <begin position="1091"/>
        <end position="1093"/>
    </location>
</feature>